<comment type="function">
    <text evidence="13 15 30">Histone methyltransferase that catalyzes methyl group transfer from S-adenosyl-L-methionine to the epsilon-amino group of 'Lys-4' of histone H3 (H3K4) (PubMed:25561738). Part of chromatin remodeling machinery predominantly forms H3K4me1 methylation marks at active chromatin sites where transcription and DNA repair take place (PubMed:17500065, PubMed:25561738). Acts as a coactivator for estrogen receptor by being recruited by ESR1, thereby activating transcription (PubMed:16603732).</text>
</comment>
<comment type="catalytic activity">
    <reaction evidence="30">
        <text>L-lysyl(4)-[histone H3] + S-adenosyl-L-methionine = N(6)-methyl-L-lysyl(4)-[histone H3] + S-adenosyl-L-homocysteine + H(+)</text>
        <dbReference type="Rhea" id="RHEA:60264"/>
        <dbReference type="Rhea" id="RHEA-COMP:15543"/>
        <dbReference type="Rhea" id="RHEA-COMP:15547"/>
        <dbReference type="ChEBI" id="CHEBI:15378"/>
        <dbReference type="ChEBI" id="CHEBI:29969"/>
        <dbReference type="ChEBI" id="CHEBI:57856"/>
        <dbReference type="ChEBI" id="CHEBI:59789"/>
        <dbReference type="ChEBI" id="CHEBI:61929"/>
        <dbReference type="EC" id="2.1.1.364"/>
    </reaction>
    <physiologicalReaction direction="left-to-right" evidence="37">
        <dbReference type="Rhea" id="RHEA:60265"/>
    </physiologicalReaction>
</comment>
<comment type="subunit">
    <text evidence="12 13 14 15 16 17 24 25 27 30">Component of the MLL2 complex (also named ASCOM complex), at least composed of catalytic subunit KMT2D/MLL2, ASH2L, RBBP5, WDR5, NCOA6, DPY30, KDM6A, PAXIP1/PTIP, PAGR1 and alpha- and beta-tubulin (PubMed:12482968, PubMed:16603732, PubMed:17021013, PubMed:17500065, PubMed:17761849, PubMed:17851529, PubMed:23508102). Forms a core complex with the evolutionary conserved subcomplex WRAD composed of WDR5, RBBP5, ASH2L/ASH2 and DPY30 subunits; WRAD differentially stimulates the methyltransferase activity (PubMed:25561738). Interacts with ESR1; interaction is direct (PubMed:16603732). Interacts (via WIN motif) with WDR5 (PubMed:22266653, PubMed:22665483).</text>
</comment>
<comment type="interaction">
    <interactant intactId="EBI-996065">
        <id>O14686</id>
    </interactant>
    <interactant intactId="EBI-608057">
        <id>P10275</id>
        <label>AR</label>
    </interactant>
    <organismsDiffer>false</organismsDiffer>
    <experiments>3</experiments>
</comment>
<comment type="interaction">
    <interactant intactId="EBI-996065">
        <id>O14686</id>
    </interactant>
    <interactant intactId="EBI-16130425">
        <id>Q9UBL3-3</id>
        <label>ASH2L</label>
    </interactant>
    <organismsDiffer>false</organismsDiffer>
    <experiments>2</experiments>
</comment>
<comment type="interaction">
    <interactant intactId="EBI-996065">
        <id>O14686</id>
    </interactant>
    <interactant intactId="EBI-78473">
        <id>P03372</id>
        <label>ESR1</label>
    </interactant>
    <organismsDiffer>false</organismsDiffer>
    <experiments>3</experiments>
</comment>
<comment type="interaction">
    <interactant intactId="EBI-996065">
        <id>O14686</id>
    </interactant>
    <interactant intactId="EBI-437708">
        <id>P62937</id>
        <label>PPIA</label>
    </interactant>
    <organismsDiffer>false</organismsDiffer>
    <experiments>2</experiments>
</comment>
<comment type="interaction">
    <interactant intactId="EBI-996065">
        <id>O14686</id>
    </interactant>
    <interactant intactId="EBI-540834">
        <id>P61964</id>
        <label>WDR5</label>
    </interactant>
    <organismsDiffer>false</organismsDiffer>
    <experiments>11</experiments>
</comment>
<comment type="subcellular location">
    <subcellularLocation>
        <location evidence="27">Nucleus</location>
    </subcellularLocation>
</comment>
<comment type="alternative products">
    <event type="alternative splicing"/>
    <isoform>
        <id>O14686-1</id>
        <name>1</name>
        <sequence type="displayed"/>
    </isoform>
    <isoform>
        <id>O14686-3</id>
        <name>3</name>
        <sequence type="described" ref="VSP_008560"/>
    </isoform>
</comment>
<comment type="tissue specificity">
    <text>Expressed in most adult tissues, including a variety of hematoipoietic cells, with the exception of the liver.</text>
</comment>
<comment type="domain">
    <text>LXXLL motifs 5 and 6 are essential for the association with ESR1 nuclear receptor.</text>
</comment>
<comment type="disease" evidence="18 19 20 21 22 23 26 28 29 31">
    <disease id="DI-02865">
        <name>Kabuki syndrome 1</name>
        <acronym>KABUK1</acronym>
        <description>An autosomal dominant, congenital syndrome characterized by intellectual disability and additional features, including postnatal dwarfism, a peculiar facies characterized by long palpebral fissures with eversion of the lateral third of the lower eyelids, a broad and depressed nasal tip, large prominent earlobes, a cleft or high-arched palate, scoliosis, short fifth finger, persistence of fingerpads, radiographic abnormalities of the vertebrae, hands, and hip joints, and recurrent otitis media in infancy.</description>
        <dbReference type="MIM" id="147920"/>
    </disease>
    <text>The disease is caused by variants affecting the gene represented in this entry.</text>
</comment>
<comment type="disease" evidence="32 33 34">
    <disease id="DI-06584">
        <name>Branchial arch abnormalities, choanal atresia, athelia, hearing loss, and hypothyroidism syndrome</name>
        <acronym>BCAHH</acronym>
        <description>An autosomal dominant disorder characterized by choanal atresia, athelia or hypoplastic nipples, branchial sinus abnormalities, neck pits, lacrimal duct anomalies, hearing loss, external ear malformations, delayed or absent pubertal development, and thyroid abnormalities. Additional features may include developmental delay, growth failure and short stature.</description>
        <dbReference type="MIM" id="620186"/>
    </disease>
    <text>The disease is caused by variants affecting the gene represented in this entry.</text>
</comment>
<comment type="miscellaneous">
    <text>This gene mapped to a chromosomal region involved in duplications and translocations associated with cancer.</text>
</comment>
<comment type="similarity">
    <text evidence="7">Belongs to the class V-like SAM-binding methyltransferase superfamily. Histone-lysine methyltransferase family. TRX/MLL subfamily.</text>
</comment>
<comment type="caution">
    <text evidence="36">Another protein KMT2B/MLL4, located on chromosome 19, was first named MLL2 (see AC Q9UMN6). Thus, KMT2B/MLL4 is often referred to as MLL2 and vice versa in the literature.</text>
</comment>
<protein>
    <recommendedName>
        <fullName>Histone-lysine N-methyltransferase 2D</fullName>
        <shortName>Lysine N-methyltransferase 2D</shortName>
        <ecNumber evidence="30">2.1.1.364</ecNumber>
    </recommendedName>
    <alternativeName>
        <fullName>ALL1-related protein</fullName>
    </alternativeName>
    <alternativeName>
        <fullName>Myeloid/lymphoid or mixed-lineage leukemia protein 2</fullName>
    </alternativeName>
</protein>
<dbReference type="EC" id="2.1.1.364" evidence="30"/>
<dbReference type="EMBL" id="AF010403">
    <property type="protein sequence ID" value="AAC51734.1"/>
    <property type="molecule type" value="mRNA"/>
</dbReference>
<dbReference type="EMBL" id="AF010404">
    <property type="protein sequence ID" value="AAC51735.1"/>
    <property type="molecule type" value="mRNA"/>
</dbReference>
<dbReference type="EMBL" id="AC011603">
    <property type="status" value="NOT_ANNOTATED_CDS"/>
    <property type="molecule type" value="Genomic_DNA"/>
</dbReference>
<dbReference type="CCDS" id="CCDS44873.1">
    <molecule id="O14686-1"/>
</dbReference>
<dbReference type="PIR" id="T03454">
    <property type="entry name" value="T03454"/>
</dbReference>
<dbReference type="PIR" id="T03455">
    <property type="entry name" value="T03455"/>
</dbReference>
<dbReference type="RefSeq" id="NP_003473.3">
    <molecule id="O14686-1"/>
    <property type="nucleotide sequence ID" value="NM_003482.4"/>
</dbReference>
<dbReference type="RefSeq" id="XP_005269219.1">
    <property type="nucleotide sequence ID" value="XM_005269162.4"/>
</dbReference>
<dbReference type="RefSeq" id="XP_006719677.1">
    <property type="nucleotide sequence ID" value="XM_006719614.3"/>
</dbReference>
<dbReference type="PDB" id="3UVK">
    <property type="method" value="X-ray"/>
    <property type="resolution" value="1.40 A"/>
    <property type="chains" value="B=5337-5347"/>
</dbReference>
<dbReference type="PDB" id="4ERQ">
    <property type="method" value="X-ray"/>
    <property type="resolution" value="1.91 A"/>
    <property type="chains" value="D/E/F=5333-5346"/>
</dbReference>
<dbReference type="PDB" id="4Z4P">
    <property type="method" value="X-ray"/>
    <property type="resolution" value="2.20 A"/>
    <property type="chains" value="A=5382-5536"/>
</dbReference>
<dbReference type="PDB" id="6O7G">
    <property type="method" value="NMR"/>
    <property type="chains" value="B=1503-1562"/>
</dbReference>
<dbReference type="PDB" id="8U2Y">
    <property type="method" value="NMR"/>
    <property type="chains" value="B=1503-1562"/>
</dbReference>
<dbReference type="PDB" id="9ATN">
    <property type="method" value="NMR"/>
    <property type="chains" value="A=227-322"/>
</dbReference>
<dbReference type="PDBsum" id="3UVK"/>
<dbReference type="PDBsum" id="4ERQ"/>
<dbReference type="PDBsum" id="4Z4P"/>
<dbReference type="PDBsum" id="6O7G"/>
<dbReference type="PDBsum" id="8U2Y"/>
<dbReference type="PDBsum" id="9ATN"/>
<dbReference type="SMR" id="O14686"/>
<dbReference type="BioGRID" id="113758">
    <property type="interactions" value="167"/>
</dbReference>
<dbReference type="ComplexPortal" id="CPX-7104">
    <property type="entry name" value="Histone-lysine N-methyltransferase complex, KMT2D variant"/>
</dbReference>
<dbReference type="CORUM" id="O14686"/>
<dbReference type="DIP" id="DIP-37875N"/>
<dbReference type="ELM" id="O14686"/>
<dbReference type="FunCoup" id="O14686">
    <property type="interactions" value="2498"/>
</dbReference>
<dbReference type="IntAct" id="O14686">
    <property type="interactions" value="111"/>
</dbReference>
<dbReference type="MINT" id="O14686"/>
<dbReference type="STRING" id="9606.ENSP00000301067"/>
<dbReference type="BindingDB" id="O14686"/>
<dbReference type="ChEMBL" id="CHEMBL2189114"/>
<dbReference type="GlyCosmos" id="O14686">
    <property type="glycosylation" value="4 sites, 1 glycan"/>
</dbReference>
<dbReference type="GlyGen" id="O14686">
    <property type="glycosylation" value="20 sites, 1 O-linked glycan (8 sites)"/>
</dbReference>
<dbReference type="iPTMnet" id="O14686"/>
<dbReference type="PhosphoSitePlus" id="O14686"/>
<dbReference type="BioMuta" id="KMT2D"/>
<dbReference type="CPTAC" id="CPTAC-978"/>
<dbReference type="jPOST" id="O14686"/>
<dbReference type="MassIVE" id="O14686"/>
<dbReference type="PaxDb" id="9606-ENSP00000301067"/>
<dbReference type="PeptideAtlas" id="O14686"/>
<dbReference type="ProteomicsDB" id="48168">
    <molecule id="O14686-1"/>
</dbReference>
<dbReference type="ProteomicsDB" id="48169">
    <molecule id="O14686-3"/>
</dbReference>
<dbReference type="Pumba" id="O14686"/>
<dbReference type="Antibodypedia" id="25797">
    <property type="antibodies" value="136 antibodies from 31 providers"/>
</dbReference>
<dbReference type="DNASU" id="8085"/>
<dbReference type="Ensembl" id="ENST00000301067.12">
    <molecule id="O14686-1"/>
    <property type="protein sequence ID" value="ENSP00000301067.7"/>
    <property type="gene ID" value="ENSG00000167548.18"/>
</dbReference>
<dbReference type="Ensembl" id="ENST00000685166.1">
    <molecule id="O14686-3"/>
    <property type="protein sequence ID" value="ENSP00000509386.1"/>
    <property type="gene ID" value="ENSG00000167548.18"/>
</dbReference>
<dbReference type="GeneID" id="8085"/>
<dbReference type="KEGG" id="hsa:8085"/>
<dbReference type="MANE-Select" id="ENST00000301067.12">
    <property type="protein sequence ID" value="ENSP00000301067.7"/>
    <property type="RefSeq nucleotide sequence ID" value="NM_003482.4"/>
    <property type="RefSeq protein sequence ID" value="NP_003473.3"/>
</dbReference>
<dbReference type="UCSC" id="uc001rta.4">
    <molecule id="O14686-1"/>
    <property type="organism name" value="human"/>
</dbReference>
<dbReference type="AGR" id="HGNC:7133"/>
<dbReference type="CTD" id="8085"/>
<dbReference type="DisGeNET" id="8085"/>
<dbReference type="GeneCards" id="KMT2D"/>
<dbReference type="GeneReviews" id="KMT2D"/>
<dbReference type="HGNC" id="HGNC:7133">
    <property type="gene designation" value="KMT2D"/>
</dbReference>
<dbReference type="HPA" id="ENSG00000167548">
    <property type="expression patterns" value="Low tissue specificity"/>
</dbReference>
<dbReference type="MalaCards" id="KMT2D"/>
<dbReference type="MIM" id="147920">
    <property type="type" value="phenotype"/>
</dbReference>
<dbReference type="MIM" id="602113">
    <property type="type" value="gene"/>
</dbReference>
<dbReference type="MIM" id="620186">
    <property type="type" value="phenotype"/>
</dbReference>
<dbReference type="neXtProt" id="NX_O14686"/>
<dbReference type="OpenTargets" id="ENSG00000167548"/>
<dbReference type="Orphanet" id="589856">
    <property type="disease" value="Choanal atresia-athelia-hypothyroidism-delayed puberty-short stature syndrome"/>
</dbReference>
<dbReference type="Orphanet" id="2322">
    <property type="disease" value="Kabuki syndrome"/>
</dbReference>
<dbReference type="PharmGKB" id="PA30846"/>
<dbReference type="VEuPathDB" id="HostDB:ENSG00000167548"/>
<dbReference type="eggNOG" id="KOG4443">
    <property type="taxonomic scope" value="Eukaryota"/>
</dbReference>
<dbReference type="GeneTree" id="ENSGT00940000156707"/>
<dbReference type="HOGENOM" id="CLU_000065_0_0_1"/>
<dbReference type="InParanoid" id="O14686"/>
<dbReference type="OMA" id="CAVWSAG"/>
<dbReference type="OrthoDB" id="308383at2759"/>
<dbReference type="PAN-GO" id="O14686">
    <property type="GO annotations" value="5 GO annotations based on evolutionary models"/>
</dbReference>
<dbReference type="PhylomeDB" id="O14686"/>
<dbReference type="TreeFam" id="TF354317"/>
<dbReference type="BioCyc" id="MetaCyc:HS09574-MONOMER"/>
<dbReference type="PathwayCommons" id="O14686"/>
<dbReference type="Reactome" id="R-HSA-201722">
    <property type="pathway name" value="Formation of the beta-catenin:TCF transactivating complex"/>
</dbReference>
<dbReference type="Reactome" id="R-HSA-3214841">
    <property type="pathway name" value="PKMTs methylate histone lysines"/>
</dbReference>
<dbReference type="Reactome" id="R-HSA-3769402">
    <property type="pathway name" value="Deactivation of the beta-catenin transactivating complex"/>
</dbReference>
<dbReference type="Reactome" id="R-HSA-5617472">
    <property type="pathway name" value="Activation of anterior HOX genes in hindbrain development during early embryogenesis"/>
</dbReference>
<dbReference type="Reactome" id="R-HSA-8936459">
    <property type="pathway name" value="RUNX1 regulates genes involved in megakaryocyte differentiation and platelet function"/>
</dbReference>
<dbReference type="Reactome" id="R-HSA-9772755">
    <property type="pathway name" value="Formation of WDR5-containing histone-modifying complexes"/>
</dbReference>
<dbReference type="Reactome" id="R-HSA-9818564">
    <property type="pathway name" value="Epigenetic regulation of gene expression by MLL3 and MLL4 complexes"/>
</dbReference>
<dbReference type="Reactome" id="R-HSA-9841922">
    <property type="pathway name" value="MLL4 and MLL3 complexes regulate expression of PPARG target genes in adipogenesis and hepatic steatosis"/>
</dbReference>
<dbReference type="SignaLink" id="O14686"/>
<dbReference type="SIGNOR" id="O14686"/>
<dbReference type="BioGRID-ORCS" id="8085">
    <property type="hits" value="261 hits in 1160 CRISPR screens"/>
</dbReference>
<dbReference type="CD-CODE" id="2958074C">
    <property type="entry name" value="Synthetic Condensate 000352"/>
</dbReference>
<dbReference type="CD-CODE" id="67BDE49F">
    <property type="entry name" value="Synthetic Condensate 000353"/>
</dbReference>
<dbReference type="CD-CODE" id="9355EE84">
    <property type="entry name" value="Synthetic Condensate 000292"/>
</dbReference>
<dbReference type="ChiTaRS" id="KMT2D">
    <property type="organism name" value="human"/>
</dbReference>
<dbReference type="EvolutionaryTrace" id="O14686"/>
<dbReference type="GeneWiki" id="MLL2"/>
<dbReference type="GenomeRNAi" id="8085"/>
<dbReference type="Pharos" id="O14686">
    <property type="development level" value="Tbio"/>
</dbReference>
<dbReference type="PRO" id="PR:O14686"/>
<dbReference type="Proteomes" id="UP000005640">
    <property type="component" value="Chromosome 12"/>
</dbReference>
<dbReference type="RNAct" id="O14686">
    <property type="molecule type" value="protein"/>
</dbReference>
<dbReference type="Bgee" id="ENSG00000167548">
    <property type="expression patterns" value="Expressed in buccal mucosa cell and 184 other cell types or tissues"/>
</dbReference>
<dbReference type="ExpressionAtlas" id="O14686">
    <property type="expression patterns" value="baseline and differential"/>
</dbReference>
<dbReference type="GO" id="GO:0044666">
    <property type="term" value="C:MLL3/4 complex"/>
    <property type="evidence" value="ECO:0000314"/>
    <property type="project" value="UniProtKB"/>
</dbReference>
<dbReference type="GO" id="GO:0005654">
    <property type="term" value="C:nucleoplasm"/>
    <property type="evidence" value="ECO:0000304"/>
    <property type="project" value="Reactome"/>
</dbReference>
<dbReference type="GO" id="GO:0005634">
    <property type="term" value="C:nucleus"/>
    <property type="evidence" value="ECO:0000303"/>
    <property type="project" value="UniProtKB"/>
</dbReference>
<dbReference type="GO" id="GO:0003677">
    <property type="term" value="F:DNA binding"/>
    <property type="evidence" value="ECO:0000303"/>
    <property type="project" value="UniProtKB"/>
</dbReference>
<dbReference type="GO" id="GO:0042800">
    <property type="term" value="F:histone H3K4 methyltransferase activity"/>
    <property type="evidence" value="ECO:0000250"/>
    <property type="project" value="UniProtKB"/>
</dbReference>
<dbReference type="GO" id="GO:0140945">
    <property type="term" value="F:histone H3K4 monomethyltransferase activity"/>
    <property type="evidence" value="ECO:0007669"/>
    <property type="project" value="RHEA"/>
</dbReference>
<dbReference type="GO" id="GO:0140999">
    <property type="term" value="F:histone H3K4 trimethyltransferase activity"/>
    <property type="evidence" value="ECO:0007669"/>
    <property type="project" value="UniProtKB-EC"/>
</dbReference>
<dbReference type="GO" id="GO:0000976">
    <property type="term" value="F:transcription cis-regulatory region binding"/>
    <property type="evidence" value="ECO:0000314"/>
    <property type="project" value="UniProtKB"/>
</dbReference>
<dbReference type="GO" id="GO:0003713">
    <property type="term" value="F:transcription coactivator activity"/>
    <property type="evidence" value="ECO:0000318"/>
    <property type="project" value="GO_Central"/>
</dbReference>
<dbReference type="GO" id="GO:0008270">
    <property type="term" value="F:zinc ion binding"/>
    <property type="evidence" value="ECO:0007669"/>
    <property type="project" value="UniProtKB-KW"/>
</dbReference>
<dbReference type="GO" id="GO:1904837">
    <property type="term" value="P:beta-catenin-TCF complex assembly"/>
    <property type="evidence" value="ECO:0000304"/>
    <property type="project" value="Reactome"/>
</dbReference>
<dbReference type="GO" id="GO:0031507">
    <property type="term" value="P:heterochromatin formation"/>
    <property type="evidence" value="ECO:0000250"/>
    <property type="project" value="UniProtKB"/>
</dbReference>
<dbReference type="GO" id="GO:0032259">
    <property type="term" value="P:methylation"/>
    <property type="evidence" value="ECO:0007669"/>
    <property type="project" value="UniProtKB-KW"/>
</dbReference>
<dbReference type="GO" id="GO:0001555">
    <property type="term" value="P:oocyte growth"/>
    <property type="evidence" value="ECO:0000250"/>
    <property type="project" value="UniProtKB"/>
</dbReference>
<dbReference type="GO" id="GO:0048477">
    <property type="term" value="P:oogenesis"/>
    <property type="evidence" value="ECO:0000250"/>
    <property type="project" value="UniProtKB"/>
</dbReference>
<dbReference type="GO" id="GO:0008284">
    <property type="term" value="P:positive regulation of cell population proliferation"/>
    <property type="evidence" value="ECO:0000315"/>
    <property type="project" value="UniProtKB"/>
</dbReference>
<dbReference type="GO" id="GO:0033148">
    <property type="term" value="P:positive regulation of intracellular estrogen receptor signaling pathway"/>
    <property type="evidence" value="ECO:0000315"/>
    <property type="project" value="UniProtKB"/>
</dbReference>
<dbReference type="GO" id="GO:0045944">
    <property type="term" value="P:positive regulation of transcription by RNA polymerase II"/>
    <property type="evidence" value="ECO:0000315"/>
    <property type="project" value="UniProtKB"/>
</dbReference>
<dbReference type="GO" id="GO:0006355">
    <property type="term" value="P:regulation of DNA-templated transcription"/>
    <property type="evidence" value="ECO:0000303"/>
    <property type="project" value="UniProtKB"/>
</dbReference>
<dbReference type="GO" id="GO:0043627">
    <property type="term" value="P:response to estrogen"/>
    <property type="evidence" value="ECO:0000314"/>
    <property type="project" value="UniProtKB"/>
</dbReference>
<dbReference type="CDD" id="cd15695">
    <property type="entry name" value="ePHD1_KMT2D"/>
    <property type="match status" value="1"/>
</dbReference>
<dbReference type="CDD" id="cd15698">
    <property type="entry name" value="ePHD2_KMT2D"/>
    <property type="match status" value="1"/>
</dbReference>
<dbReference type="CDD" id="cd22027">
    <property type="entry name" value="HMG-box_KMT2D"/>
    <property type="match status" value="1"/>
</dbReference>
<dbReference type="CDD" id="cd15509">
    <property type="entry name" value="PHD1_KMT2C_like"/>
    <property type="match status" value="1"/>
</dbReference>
<dbReference type="CDD" id="cd15597">
    <property type="entry name" value="PHD3_KMT2D"/>
    <property type="match status" value="1"/>
</dbReference>
<dbReference type="CDD" id="cd15513">
    <property type="entry name" value="PHD5_KMT2C_like"/>
    <property type="match status" value="1"/>
</dbReference>
<dbReference type="CDD" id="cd15601">
    <property type="entry name" value="PHD5_KMT2D"/>
    <property type="match status" value="1"/>
</dbReference>
<dbReference type="CDD" id="cd19209">
    <property type="entry name" value="SET_KMT2D"/>
    <property type="match status" value="1"/>
</dbReference>
<dbReference type="FunFam" id="1.10.30.10:FF:000009">
    <property type="entry name" value="Histone-lysine N-methyltransferase"/>
    <property type="match status" value="1"/>
</dbReference>
<dbReference type="FunFam" id="2.170.270.10:FF:000119">
    <property type="entry name" value="Histone-lysine N-methyltransferase"/>
    <property type="match status" value="1"/>
</dbReference>
<dbReference type="FunFam" id="3.30.160.360:FF:000001">
    <property type="entry name" value="Histone-lysine N-methyltransferase"/>
    <property type="match status" value="1"/>
</dbReference>
<dbReference type="FunFam" id="3.30.40.10:FF:000002">
    <property type="entry name" value="Histone-lysine N-methyltransferase"/>
    <property type="match status" value="1"/>
</dbReference>
<dbReference type="FunFam" id="3.30.40.10:FF:000070">
    <property type="entry name" value="Histone-lysine N-methyltransferase"/>
    <property type="match status" value="1"/>
</dbReference>
<dbReference type="FunFam" id="3.30.40.10:FF:000336">
    <property type="entry name" value="Histone-lysine N-methyltransferase"/>
    <property type="match status" value="1"/>
</dbReference>
<dbReference type="FunFam" id="3.30.40.10:FF:001142">
    <property type="entry name" value="Histone-lysine N-methyltransferase"/>
    <property type="match status" value="1"/>
</dbReference>
<dbReference type="FunFam" id="3.30.40.10:FF:000080">
    <property type="entry name" value="Histone-lysine N-methyltransferase 2C"/>
    <property type="match status" value="1"/>
</dbReference>
<dbReference type="FunFam" id="2.170.270.10:FF:000075">
    <property type="entry name" value="Histone-lysine N-methyltransferase 2D"/>
    <property type="match status" value="1"/>
</dbReference>
<dbReference type="FunFam" id="3.30.40.10:FF:000329">
    <property type="entry name" value="Histone-lysine N-methyltransferase 2D"/>
    <property type="match status" value="1"/>
</dbReference>
<dbReference type="Gene3D" id="3.30.160.360">
    <property type="match status" value="1"/>
</dbReference>
<dbReference type="Gene3D" id="1.10.30.10">
    <property type="entry name" value="High mobility group box domain"/>
    <property type="match status" value="1"/>
</dbReference>
<dbReference type="Gene3D" id="2.170.270.10">
    <property type="entry name" value="SET domain"/>
    <property type="match status" value="1"/>
</dbReference>
<dbReference type="Gene3D" id="3.30.40.10">
    <property type="entry name" value="Zinc/RING finger domain, C3HC4 (zinc finger)"/>
    <property type="match status" value="6"/>
</dbReference>
<dbReference type="IDEAL" id="IID00356"/>
<dbReference type="InterPro" id="IPR034732">
    <property type="entry name" value="EPHD"/>
</dbReference>
<dbReference type="InterPro" id="IPR003889">
    <property type="entry name" value="FYrich_C"/>
</dbReference>
<dbReference type="InterPro" id="IPR003888">
    <property type="entry name" value="FYrich_N"/>
</dbReference>
<dbReference type="InterPro" id="IPR009071">
    <property type="entry name" value="HMG_box_dom"/>
</dbReference>
<dbReference type="InterPro" id="IPR036910">
    <property type="entry name" value="HMG_box_dom_sf"/>
</dbReference>
<dbReference type="InterPro" id="IPR041961">
    <property type="entry name" value="KMT2D_ePHD1"/>
</dbReference>
<dbReference type="InterPro" id="IPR041964">
    <property type="entry name" value="KMT2D_ePHD2"/>
</dbReference>
<dbReference type="InterPro" id="IPR047000">
    <property type="entry name" value="KMT2D_PHD3"/>
</dbReference>
<dbReference type="InterPro" id="IPR046999">
    <property type="entry name" value="KMT2D_PHD5"/>
</dbReference>
<dbReference type="InterPro" id="IPR003616">
    <property type="entry name" value="Post-SET_dom"/>
</dbReference>
<dbReference type="InterPro" id="IPR001214">
    <property type="entry name" value="SET_dom"/>
</dbReference>
<dbReference type="InterPro" id="IPR046341">
    <property type="entry name" value="SET_dom_sf"/>
</dbReference>
<dbReference type="InterPro" id="IPR037890">
    <property type="entry name" value="SET_KMT2D"/>
</dbReference>
<dbReference type="InterPro" id="IPR011011">
    <property type="entry name" value="Znf_FYVE_PHD"/>
</dbReference>
<dbReference type="InterPro" id="IPR001965">
    <property type="entry name" value="Znf_PHD"/>
</dbReference>
<dbReference type="InterPro" id="IPR019787">
    <property type="entry name" value="Znf_PHD-finger"/>
</dbReference>
<dbReference type="InterPro" id="IPR001841">
    <property type="entry name" value="Znf_RING"/>
</dbReference>
<dbReference type="InterPro" id="IPR013083">
    <property type="entry name" value="Znf_RING/FYVE/PHD"/>
</dbReference>
<dbReference type="PANTHER" id="PTHR45888:SF2">
    <property type="entry name" value="HISTONE-LYSINE N-METHYLTRANSFERASE 2D"/>
    <property type="match status" value="1"/>
</dbReference>
<dbReference type="PANTHER" id="PTHR45888">
    <property type="entry name" value="HL01030P-RELATED"/>
    <property type="match status" value="1"/>
</dbReference>
<dbReference type="Pfam" id="PF05965">
    <property type="entry name" value="FYRC"/>
    <property type="match status" value="1"/>
</dbReference>
<dbReference type="Pfam" id="PF05964">
    <property type="entry name" value="FYRN"/>
    <property type="match status" value="1"/>
</dbReference>
<dbReference type="Pfam" id="PF00628">
    <property type="entry name" value="PHD"/>
    <property type="match status" value="4"/>
</dbReference>
<dbReference type="Pfam" id="PF00856">
    <property type="entry name" value="SET"/>
    <property type="match status" value="1"/>
</dbReference>
<dbReference type="Pfam" id="PF13771">
    <property type="entry name" value="zf-HC5HC2H"/>
    <property type="match status" value="1"/>
</dbReference>
<dbReference type="Pfam" id="PF13832">
    <property type="entry name" value="zf-HC5HC2H_2"/>
    <property type="match status" value="1"/>
</dbReference>
<dbReference type="SMART" id="SM00542">
    <property type="entry name" value="FYRC"/>
    <property type="match status" value="1"/>
</dbReference>
<dbReference type="SMART" id="SM00541">
    <property type="entry name" value="FYRN"/>
    <property type="match status" value="1"/>
</dbReference>
<dbReference type="SMART" id="SM00398">
    <property type="entry name" value="HMG"/>
    <property type="match status" value="1"/>
</dbReference>
<dbReference type="SMART" id="SM00249">
    <property type="entry name" value="PHD"/>
    <property type="match status" value="7"/>
</dbReference>
<dbReference type="SMART" id="SM00508">
    <property type="entry name" value="PostSET"/>
    <property type="match status" value="1"/>
</dbReference>
<dbReference type="SMART" id="SM00184">
    <property type="entry name" value="RING"/>
    <property type="match status" value="6"/>
</dbReference>
<dbReference type="SMART" id="SM00317">
    <property type="entry name" value="SET"/>
    <property type="match status" value="1"/>
</dbReference>
<dbReference type="SUPFAM" id="SSF57903">
    <property type="entry name" value="FYVE/PHD zinc finger"/>
    <property type="match status" value="5"/>
</dbReference>
<dbReference type="SUPFAM" id="SSF47095">
    <property type="entry name" value="HMG-box"/>
    <property type="match status" value="1"/>
</dbReference>
<dbReference type="SUPFAM" id="SSF82199">
    <property type="entry name" value="SET domain"/>
    <property type="match status" value="1"/>
</dbReference>
<dbReference type="PROSITE" id="PS51805">
    <property type="entry name" value="EPHD"/>
    <property type="match status" value="2"/>
</dbReference>
<dbReference type="PROSITE" id="PS51543">
    <property type="entry name" value="FYRC"/>
    <property type="match status" value="1"/>
</dbReference>
<dbReference type="PROSITE" id="PS51542">
    <property type="entry name" value="FYRN"/>
    <property type="match status" value="1"/>
</dbReference>
<dbReference type="PROSITE" id="PS50868">
    <property type="entry name" value="POST_SET"/>
    <property type="match status" value="1"/>
</dbReference>
<dbReference type="PROSITE" id="PS50280">
    <property type="entry name" value="SET"/>
    <property type="match status" value="1"/>
</dbReference>
<dbReference type="PROSITE" id="PS01359">
    <property type="entry name" value="ZF_PHD_1"/>
    <property type="match status" value="5"/>
</dbReference>
<dbReference type="PROSITE" id="PS50016">
    <property type="entry name" value="ZF_PHD_2"/>
    <property type="match status" value="5"/>
</dbReference>
<dbReference type="PROSITE" id="PS50089">
    <property type="entry name" value="ZF_RING_2"/>
    <property type="match status" value="1"/>
</dbReference>
<evidence type="ECO:0000250" key="1"/>
<evidence type="ECO:0000250" key="2">
    <source>
        <dbReference type="UniProtKB" id="Q6PDK2"/>
    </source>
</evidence>
<evidence type="ECO:0000255" key="3"/>
<evidence type="ECO:0000255" key="4">
    <source>
        <dbReference type="PROSITE-ProRule" id="PRU00146"/>
    </source>
</evidence>
<evidence type="ECO:0000255" key="5">
    <source>
        <dbReference type="PROSITE-ProRule" id="PRU00155"/>
    </source>
</evidence>
<evidence type="ECO:0000255" key="6">
    <source>
        <dbReference type="PROSITE-ProRule" id="PRU00175"/>
    </source>
</evidence>
<evidence type="ECO:0000255" key="7">
    <source>
        <dbReference type="PROSITE-ProRule" id="PRU00190"/>
    </source>
</evidence>
<evidence type="ECO:0000255" key="8">
    <source>
        <dbReference type="PROSITE-ProRule" id="PRU00875"/>
    </source>
</evidence>
<evidence type="ECO:0000255" key="9">
    <source>
        <dbReference type="PROSITE-ProRule" id="PRU00876"/>
    </source>
</evidence>
<evidence type="ECO:0000255" key="10">
    <source>
        <dbReference type="PROSITE-ProRule" id="PRU01146"/>
    </source>
</evidence>
<evidence type="ECO:0000256" key="11">
    <source>
        <dbReference type="SAM" id="MobiDB-lite"/>
    </source>
</evidence>
<evidence type="ECO:0000269" key="12">
    <source>
    </source>
</evidence>
<evidence type="ECO:0000269" key="13">
    <source>
    </source>
</evidence>
<evidence type="ECO:0000269" key="14">
    <source>
    </source>
</evidence>
<evidence type="ECO:0000269" key="15">
    <source>
    </source>
</evidence>
<evidence type="ECO:0000269" key="16">
    <source>
    </source>
</evidence>
<evidence type="ECO:0000269" key="17">
    <source>
    </source>
</evidence>
<evidence type="ECO:0000269" key="18">
    <source>
    </source>
</evidence>
<evidence type="ECO:0000269" key="19">
    <source>
    </source>
</evidence>
<evidence type="ECO:0000269" key="20">
    <source>
    </source>
</evidence>
<evidence type="ECO:0000269" key="21">
    <source>
    </source>
</evidence>
<evidence type="ECO:0000269" key="22">
    <source>
    </source>
</evidence>
<evidence type="ECO:0000269" key="23">
    <source>
    </source>
</evidence>
<evidence type="ECO:0000269" key="24">
    <source>
    </source>
</evidence>
<evidence type="ECO:0000269" key="25">
    <source>
    </source>
</evidence>
<evidence type="ECO:0000269" key="26">
    <source>
    </source>
</evidence>
<evidence type="ECO:0000269" key="27">
    <source>
    </source>
</evidence>
<evidence type="ECO:0000269" key="28">
    <source>
    </source>
</evidence>
<evidence type="ECO:0000269" key="29">
    <source>
    </source>
</evidence>
<evidence type="ECO:0000269" key="30">
    <source>
    </source>
</evidence>
<evidence type="ECO:0000269" key="31">
    <source>
    </source>
</evidence>
<evidence type="ECO:0000269" key="32">
    <source>
    </source>
</evidence>
<evidence type="ECO:0000269" key="33">
    <source>
    </source>
</evidence>
<evidence type="ECO:0000269" key="34">
    <source>
    </source>
</evidence>
<evidence type="ECO:0000303" key="35">
    <source>
    </source>
</evidence>
<evidence type="ECO:0000305" key="36"/>
<evidence type="ECO:0000305" key="37">
    <source>
    </source>
</evidence>
<evidence type="ECO:0007744" key="38">
    <source>
        <dbReference type="PDB" id="3UVK"/>
    </source>
</evidence>
<evidence type="ECO:0007744" key="39">
    <source>
        <dbReference type="PDB" id="4ERQ"/>
    </source>
</evidence>
<evidence type="ECO:0007744" key="40">
    <source>
    </source>
</evidence>
<evidence type="ECO:0007744" key="41">
    <source>
    </source>
</evidence>
<evidence type="ECO:0007744" key="42">
    <source>
    </source>
</evidence>
<evidence type="ECO:0007744" key="43">
    <source>
    </source>
</evidence>
<evidence type="ECO:0007744" key="44">
    <source>
    </source>
</evidence>
<evidence type="ECO:0007744" key="45">
    <source>
    </source>
</evidence>
<evidence type="ECO:0007744" key="46">
    <source>
    </source>
</evidence>
<evidence type="ECO:0007744" key="47">
    <source>
    </source>
</evidence>
<evidence type="ECO:0007744" key="48">
    <source>
    </source>
</evidence>
<evidence type="ECO:0007744" key="49">
    <source>
    </source>
</evidence>
<evidence type="ECO:0007744" key="50">
    <source>
    </source>
</evidence>
<evidence type="ECO:0007744" key="51">
    <source>
    </source>
</evidence>
<evidence type="ECO:0007829" key="52">
    <source>
        <dbReference type="PDB" id="3UVK"/>
    </source>
</evidence>
<evidence type="ECO:0007829" key="53">
    <source>
        <dbReference type="PDB" id="4Z4P"/>
    </source>
</evidence>
<evidence type="ECO:0007829" key="54">
    <source>
        <dbReference type="PDB" id="6O7G"/>
    </source>
</evidence>
<accession>O14686</accession>
<accession>O14687</accession>
<gene>
    <name type="primary">KMT2D</name>
    <name type="synonym">ALR</name>
    <name type="synonym">MLL2</name>
    <name type="synonym">MLL4</name>
</gene>
<organism>
    <name type="scientific">Homo sapiens</name>
    <name type="common">Human</name>
    <dbReference type="NCBI Taxonomy" id="9606"/>
    <lineage>
        <taxon>Eukaryota</taxon>
        <taxon>Metazoa</taxon>
        <taxon>Chordata</taxon>
        <taxon>Craniata</taxon>
        <taxon>Vertebrata</taxon>
        <taxon>Euteleostomi</taxon>
        <taxon>Mammalia</taxon>
        <taxon>Eutheria</taxon>
        <taxon>Euarchontoglires</taxon>
        <taxon>Primates</taxon>
        <taxon>Haplorrhini</taxon>
        <taxon>Catarrhini</taxon>
        <taxon>Hominidae</taxon>
        <taxon>Homo</taxon>
    </lineage>
</organism>
<sequence>MDSQKLAGEDKDSEPAADGPAASEDPSATESDLPNPHVGEVSVLSSGSPRLQETPQDCSGGPVRRCALCNCGEPSLHGQRELRRFELPFDWPRCPVVSPGGSPGPNEAVLPSEDLSQIGFPEGLTPAHLGEPGGSCWAHHWCAAWSAGVWGQEGPELCGVDKAIFSGISQRCSHCTRLGASIPCRSPGCPRLYHFPCATASGSFLSMKTLQLLCPEHSEGAAYLEEARCAVCEGPGELCDLFFCTSCGHHYHGACLDTALTARKRAGWQCPECKVCQACRKPGNDSKMLVCETCDKGYHTFCLKPPMEELPAHSWKCKACRVCRACGAGSAELNPNSEWFENYSLCHRCHKAQGGQTIRSVAEQHTPVCSRFSPPEPGDTPTDEPDALYVACQGQPKGGHVTSMQPKEPGPLQCEAKPLGKAGVQLEPQLEAPLNEEMPLLPPPEESPLSPPPEESPTSPPPEASRLSPPPEELPASPLPEALHLSRPLEESPLSPPPEESPLSPPPESSPFSPLEESPLSPPEESPPSPALETPLSPPPEASPLSPPFEESPLSPPPEELPTSPPPEASRLSPPPEESPMSPPPEESPMSPPPEASRLFPPFEESPLSPPPEESPLSPPPEASRLSPPPEDSPMSPPPEESPMSPPPEVSRLSPLPVVSRLSPPPEESPLSPPPEESPTSPPPEASRLSPPPEDSPTSPPPEDSPASPPPEDSLMSLPLEESPLLPLPEEPQLCPRSEGPHLSPRPEEPHLSPRPEEPHLSPQAEEPHLSPQPEEPCLCAVPEEPHLSPQAEGPHLSPQPEELHLSPQTEEPHLSPVPEEPCLSPQPEESHLSPQSEEPCLSPRPEESHLSPELEKPPLSPRPEKPPEEPGQCPAPEELPLFPPPGEPSLSPLLGEPALSEPGEPPLSPLPEELPLSPSGEPSLSPQLMPPDPLPPPLSPIITAAAPPALSPLGELEYPFGAKGDSDPESPLAAPILETPISPPPEANCTDPEPVPPMILPPSPGSPVGPASPILMEPLPPQCSPLLQHSLVPQNSPPSQCSPPALPLSVPSPLSPIGKVVGVSDEAELHEMETEKVSEPECPALEPSATSPLPSPMGDLSCPAPSPAPALDDFSGLGEDTAPLDGIDAPGSQPEPGQTPGSLASELKGSPVLLDPEELAPVTPMEVYPECKQTAGQGSPCEEQEEPRAPVAPTPPTLIKSDIVNEISNLSQGDASASFPGSEPLLGSPDPEGGGSLSMELGVSTDVSPARDEGSLRLCTDSLPETDDSLLCDAGTAISGGKAEGEKGRRRSSPARSRIKQGRSSSFPGRRRPRGGAHGGRGRGRARLKSTASSIETLVVADIDSSPSKEEEEEDDDTMQNTVVLFSNTDKFVLMQDMCVVCGSFGRGAEGHLLACSQCSQCYHPYCVNSKITKVMLLKGWRCVECIVCEVCGQASDPSRLLLCDDCDISYHTYCLDPPLLTVPKGGWKCKWCVSCMQCGAASPGFHCEWQNSYTHCGPCASLVTCPICHAPYVEEDLLIQCRHCERWMHAGCESLFTEDDVEQAADEGFDCVSCQPYVVKPVAPVAPPELVPMKVKEPEPQYFRFEGVWLTETGMALLRNLTMSPLHKRRQRRGRLGLPGEAGLEGSEPSDALGPDDKKDGDLDTDELLKGEGGVEHMECEIKLEGPVSPDVEPGKEETEESKKRKRKPYRPGIGGFMVRQRKSHTRTKKGPAAQAEVLSGDGQPDEVIPADLPAEGAVEQSLAEGDEKKKQQRRGRKKSKLEDMFPAYLQEAFFGKELLDLSRKALFAVGVGRPSFGLGTPKAKGDGGSERKELPTSQKGDDGPDIADEESRGLEGKADTPGPEDGGVKASPVPSDPEKPGTPGEGMLSSDLDRISTEELPKMESKDLQQLFKDVLGSEREQHLGCGTPGLEGSRTPLQRPFLQGGLPLGNLPSSSPMDSYPGLCQSPFLDSRERGGFFSPEPGEPDSPWTGSGGTTPSTPTTPTTEGEGDGLSYNQRSLQRWEKDEELGQLSTISPVLYANINFPNLKQDYPDWSSRCKQIMKLWRKVPAADKAPYLQKAKDNRAAHRINKVQKQAESQINKQTKVGDIARKTDRPALHLRIPPQPGALGSPPPAAAPTIFIGSPTTPAGLSTSADGFLKPPAGSVPGPDSPGELFLKLPPQVPAQVPSQDPFGLAPAYPLEPRFPTAPPTYPPYPSPTGAPAQPPMLGASSRPGAGQPGEFHTTPPGTPRHQPSTPDPFLKPRCPSLDNLAVPESPGVGGGKASEPLLSPPPFGESRKALEVKKEELGASSPSYGPPNLGFVDSPSSGTHLGGLELKTPDVFKAPLTPRASQVEPQSPGLGLRPQEPPPAQALAPSPPSHPDIFRPGSYTDPYAQPPLTPRPQPPPPESCCALPPRSLPSDPFSRVPASPQSQSSSQSPLTPRPLSAEAFCPSPVTPRFQSPDPYSRPPSRPQSRDPFAPLHKPPRPQPPEVAFKAGSLAHTSLGAGGFPAALPAGPAGELHAKVPSGQPPNFVRSPGTGAFVGTPSPMRFTFPQAVGEPSLKPPVPQPGLPPPHGINSHFGPGPTLGKPQSTNYTVATGNFHPSGSPLGPSSGSTGESYGLSPLRPPSVLPPPAPDGSLPYLSHGASQRSGITSPVEKREDPGTGMGSSLATAELPGTQDPGMSGLSQTELEKQRQRQRLRELLIRQQIQRNTLRQEKETAAAAAGAVGPPGSWGAEPSSPAFEQLSRGQTPFAGTQDKSSLVGLPPSKLSGPILGPGSFPSDDRLSRPPPPATPSSMDVNSRQLVGGSQAFYQRAPYPGSLPLQQQQQQLWQQQQATAATSMRFAMSARFPSTPGPELGRQALGSPLAGISTRLPGPGEPVPGPAGPAQFIELRHNVQKGLGPGGTPFPGQGPPQRPRFYPVSEDPHRLAPEGLRGLAVSGLPPQKPSAPPAPELNNSLHPTPHTKGPTLPTGLELVNRPPSSTELGRPNPLALEAGKLPCEDPELDDDFDAHKALEDDEELAHLGLGVDVAKGDDELGTLENLETNDPHLDDLLNGDEFDLLAYTDPELDTGDKKDIFNEHLRLVESANEKAEREALLRGVEPGPLGPEERPPPAADASEPRLASVLPEVKPKVEEGGRHPSPCQFTIATPKVEPAPAANSLGLGLKPGQSMMGSRDTRMGTGPFSSSGHTAEKASFGATGGPPAHLLTPSPLSGPGGSSLLEKFELESGALTLPGGPAASGDELDKMESSLVASELPLLIEDLLEHEKKELQKKQQLSAQLQPAQQQQQQQQQHSLLSAPGPAQAMSLPHEGSSPSLAGSQQQLSLGLAGARQPGLPQPLMPTQPPAHALQQRLAPSMAMVSNQGHMLSGQHGGQAGLVPQQSSQPVLSQKPMGTMPPSMCMKPQQLAMQQQLANSFFPDTDLDKFAAEDIIDPIAKAKMVALKGIKKVMAQGSIGVAPGMNRQQVSLLAQRLSGGPSSDLQNHVAAGSGQERSAGDPSQPRPNPPTFAQGVINEADQRQYEEWLFHTQQLLQMQLKVLEEQIGVHRKSRKALCAKQRTAKKAGREFPEADAEKLKLVTEQQSKIQKQLDQVRKQQKEHTNLMAEYRNKQQQQQQQQQQQQQQHSAVLALSPSQSPRLLTKLPGQLLPGHGLQPPQGPPGGQAGGLRLTPGGMALPGQPGGPFLNTALAQQQQQQHSGGAGSLAGPSGGFFPGNLALRSLGPDSRLLQERQLQLQQQRMQLAQKLQQQQQQQQQQQHLLGQVAIQQQQQQGPGVQTNQALGPKPQGLMPPSSHQGLLVQQLSPQPPQGPQGMLGPAQVAVLQQQHPGALGPQGPHRQVLMTQSRVLSSPQLAQQGQGLMGHRLVTAQQQQQQQQHQQQGSMAGLSHLQQSLMSHSGQPKLSAQPMGSLQQLQQQQQLQQQQQLQQQQQQQLQQQQQLQQQQLQQQQQQQQLQQQQQQQLQQQQQQLQQQQQQQQQQFQQQQQQQQMGLLNQSRTLLSPQQQQQQQVALGPGMPAKPLQHFSSPGALGPTLLLTGKEQNTVDPAVSSEATEGPSTHQGGPLAIGTTPESMATEPGEVKPSLSGDSQLLLVQPQPQPQPSSLQLQPPLRLPGQQQQQVSLLHTAGGGSHGQLGSGSSSEASSVPHLLAQPSVSLGDQPGSMTQNLLGPQQPMLERPMQNNTGPQPPKPGPVLQSGQGLPGVGIMPTVGQLRAQLQGVLAKNPQLRHLSPQQQQQLQALLMQRQLQQSQAVRQTPPYQEPGTQTSPLQGLLGCQPQLGGFPGPQTGPLQELGAGPRPQGPPRLPAPPGALSTGPVLGPVHPTPPPSSPQEPKRPSQLPSPSSQLPTEAQLPPTHPGTPKPQGPTLEPPPGRVSPAAAQLADTLFSKGLGPWDPPDNLAETQKPEQSSLVPGHLDQVNGQVVPEASQLSIKQEPREEPCALGAQSVKREANGEPIGAPGTSNHLLLAGPRSEAGHLLLQKLLRAKNVQLSTGRGSEGLRAEINGHIDSKLAGLEQKLQGTPSNKEDAAARKPLTPKPKRVQKASDRLVSSRKKLRKEDGVRASEALLKQLKQELSLLPLTEPAITANFSLFAPFGSGCPVNGQSQLRGAFGSGALPTGPDYYSQLLTKNNLSNPPTPPSSLPPTPPPSVQQKMVNGVTPSEELGEHPKDAASARDSERALRDTSEVKSLDLLAALPTPPHNQTEDVRMESDEDSDSPDSIVPASSPESILGEEAPRFPHLGSGRWEQEDRALSPVIPLIPRASIPVFPDTKPYGALGLEVPGKLPVTTWEKGKGSEVSVMLTVSAAAAKNLNGVMVAVAELLSMKIPNSYEVLFPESPARAGTEPKKGEAEGPGGKEKGLEGKSPDTGPDWLKQFDAVLPGYTLKSQLDILSLLKQESPAPEPPTQHSYTYNVSNLDVRQLSAPPPEEPSPPPSPLAPSPASPPTEPLVELPTEPLAEPPVPSPLPLASSPESARPKPRARPPEEGEDSRPPRLKKWKGVRWKRLRLLLTIQKGSGRQEDEREVAEFMEQLGTALRPDKVPRDMRRCCFCHEEGDGATDGPARLLNLDLDLWVHLNCALWSTEVYETQGGALMNVEVALHRGLLTKCSLCQRTGATSSCNRMRCPNVYHFACAIRAKCMFFKDKTMLCPMHKIKGPCEQELSSFAVFRRVYIERDEVKQIASIIQRGERLHMFRVGGLVFHAIGQLLPHQMADFHSATALYPVGYEATRIYWSLRTNNRRCCYRCSIGENNGRPEFVIKVIEQGLEDLVFTDASPQAVWNRIIEPVAAMRKEADMLRLFPEYLKGEELFGLTVHAVLRIAESLPGVESCQNYLFRYGRHPLMELPLMINPTGCARSEPKILTHYKRPHTLNSTSMSKAYQSTFTGETNTPYSKQFVHSKSSQYRRLRTEWKNNVYLARSRIQGLGLYAAKDLEKHTMVIEYIGTIIRNEVANRREKIYEEQNRGIYMFRINNEHVIDATLTGGPARYINHSCAPNCVAEVVTFDKEDKIIIISSRRIPKGEELTYDYQFDFEDDQHKIPCHCGAWNCRKWMN</sequence>
<reference key="1">
    <citation type="journal article" date="1997" name="Oncogene">
        <title>Structure and expression pattern of human ALR, a novel gene with strong homology to ALL-1 involved in acute leukemia and to Drosophila trithorax.</title>
        <authorList>
            <person name="Prasad R."/>
            <person name="Zhadanov A.B."/>
            <person name="Sedkov Y."/>
            <person name="Bullrich F."/>
            <person name="Druck T."/>
            <person name="Rallapalli R."/>
            <person name="Yano T."/>
            <person name="Alder H."/>
            <person name="Croce C.M."/>
            <person name="Huebner K."/>
            <person name="Mazo A."/>
            <person name="Canaani E."/>
        </authorList>
    </citation>
    <scope>NUCLEOTIDE SEQUENCE [MRNA] (ISOFORMS 1 AND 3)</scope>
</reference>
<reference key="2">
    <citation type="journal article" date="2006" name="Nature">
        <title>The finished DNA sequence of human chromosome 12.</title>
        <authorList>
            <person name="Scherer S.E."/>
            <person name="Muzny D.M."/>
            <person name="Buhay C.J."/>
            <person name="Chen R."/>
            <person name="Cree A."/>
            <person name="Ding Y."/>
            <person name="Dugan-Rocha S."/>
            <person name="Gill R."/>
            <person name="Gunaratne P."/>
            <person name="Harris R.A."/>
            <person name="Hawes A.C."/>
            <person name="Hernandez J."/>
            <person name="Hodgson A.V."/>
            <person name="Hume J."/>
            <person name="Jackson A."/>
            <person name="Khan Z.M."/>
            <person name="Kovar-Smith C."/>
            <person name="Lewis L.R."/>
            <person name="Lozado R.J."/>
            <person name="Metzker M.L."/>
            <person name="Milosavljevic A."/>
            <person name="Miner G.R."/>
            <person name="Montgomery K.T."/>
            <person name="Morgan M.B."/>
            <person name="Nazareth L.V."/>
            <person name="Scott G."/>
            <person name="Sodergren E."/>
            <person name="Song X.-Z."/>
            <person name="Steffen D."/>
            <person name="Lovering R.C."/>
            <person name="Wheeler D.A."/>
            <person name="Worley K.C."/>
            <person name="Yuan Y."/>
            <person name="Zhang Z."/>
            <person name="Adams C.Q."/>
            <person name="Ansari-Lari M.A."/>
            <person name="Ayele M."/>
            <person name="Brown M.J."/>
            <person name="Chen G."/>
            <person name="Chen Z."/>
            <person name="Clerc-Blankenburg K.P."/>
            <person name="Davis C."/>
            <person name="Delgado O."/>
            <person name="Dinh H.H."/>
            <person name="Draper H."/>
            <person name="Gonzalez-Garay M.L."/>
            <person name="Havlak P."/>
            <person name="Jackson L.R."/>
            <person name="Jacob L.S."/>
            <person name="Kelly S.H."/>
            <person name="Li L."/>
            <person name="Li Z."/>
            <person name="Liu J."/>
            <person name="Liu W."/>
            <person name="Lu J."/>
            <person name="Maheshwari M."/>
            <person name="Nguyen B.-V."/>
            <person name="Okwuonu G.O."/>
            <person name="Pasternak S."/>
            <person name="Perez L.M."/>
            <person name="Plopper F.J.H."/>
            <person name="Santibanez J."/>
            <person name="Shen H."/>
            <person name="Tabor P.E."/>
            <person name="Verduzco D."/>
            <person name="Waldron L."/>
            <person name="Wang Q."/>
            <person name="Williams G.A."/>
            <person name="Zhang J."/>
            <person name="Zhou J."/>
            <person name="Allen C.C."/>
            <person name="Amin A.G."/>
            <person name="Anyalebechi V."/>
            <person name="Bailey M."/>
            <person name="Barbaria J.A."/>
            <person name="Bimage K.E."/>
            <person name="Bryant N.P."/>
            <person name="Burch P.E."/>
            <person name="Burkett C.E."/>
            <person name="Burrell K.L."/>
            <person name="Calderon E."/>
            <person name="Cardenas V."/>
            <person name="Carter K."/>
            <person name="Casias K."/>
            <person name="Cavazos I."/>
            <person name="Cavazos S.R."/>
            <person name="Ceasar H."/>
            <person name="Chacko J."/>
            <person name="Chan S.N."/>
            <person name="Chavez D."/>
            <person name="Christopoulos C."/>
            <person name="Chu J."/>
            <person name="Cockrell R."/>
            <person name="Cox C.D."/>
            <person name="Dang M."/>
            <person name="Dathorne S.R."/>
            <person name="David R."/>
            <person name="Davis C.M."/>
            <person name="Davy-Carroll L."/>
            <person name="Deshazo D.R."/>
            <person name="Donlin J.E."/>
            <person name="D'Souza L."/>
            <person name="Eaves K.A."/>
            <person name="Egan A."/>
            <person name="Emery-Cohen A.J."/>
            <person name="Escotto M."/>
            <person name="Flagg N."/>
            <person name="Forbes L.D."/>
            <person name="Gabisi A.M."/>
            <person name="Garza M."/>
            <person name="Hamilton C."/>
            <person name="Henderson N."/>
            <person name="Hernandez O."/>
            <person name="Hines S."/>
            <person name="Hogues M.E."/>
            <person name="Huang M."/>
            <person name="Idlebird D.G."/>
            <person name="Johnson R."/>
            <person name="Jolivet A."/>
            <person name="Jones S."/>
            <person name="Kagan R."/>
            <person name="King L.M."/>
            <person name="Leal B."/>
            <person name="Lebow H."/>
            <person name="Lee S."/>
            <person name="LeVan J.M."/>
            <person name="Lewis L.C."/>
            <person name="London P."/>
            <person name="Lorensuhewa L.M."/>
            <person name="Loulseged H."/>
            <person name="Lovett D.A."/>
            <person name="Lucier A."/>
            <person name="Lucier R.L."/>
            <person name="Ma J."/>
            <person name="Madu R.C."/>
            <person name="Mapua P."/>
            <person name="Martindale A.D."/>
            <person name="Martinez E."/>
            <person name="Massey E."/>
            <person name="Mawhiney S."/>
            <person name="Meador M.G."/>
            <person name="Mendez S."/>
            <person name="Mercado C."/>
            <person name="Mercado I.C."/>
            <person name="Merritt C.E."/>
            <person name="Miner Z.L."/>
            <person name="Minja E."/>
            <person name="Mitchell T."/>
            <person name="Mohabbat F."/>
            <person name="Mohabbat K."/>
            <person name="Montgomery B."/>
            <person name="Moore N."/>
            <person name="Morris S."/>
            <person name="Munidasa M."/>
            <person name="Ngo R.N."/>
            <person name="Nguyen N.B."/>
            <person name="Nickerson E."/>
            <person name="Nwaokelemeh O.O."/>
            <person name="Nwokenkwo S."/>
            <person name="Obregon M."/>
            <person name="Oguh M."/>
            <person name="Oragunye N."/>
            <person name="Oviedo R.J."/>
            <person name="Parish B.J."/>
            <person name="Parker D.N."/>
            <person name="Parrish J."/>
            <person name="Parks K.L."/>
            <person name="Paul H.A."/>
            <person name="Payton B.A."/>
            <person name="Perez A."/>
            <person name="Perrin W."/>
            <person name="Pickens A."/>
            <person name="Primus E.L."/>
            <person name="Pu L.-L."/>
            <person name="Puazo M."/>
            <person name="Quiles M.M."/>
            <person name="Quiroz J.B."/>
            <person name="Rabata D."/>
            <person name="Reeves K."/>
            <person name="Ruiz S.J."/>
            <person name="Shao H."/>
            <person name="Sisson I."/>
            <person name="Sonaike T."/>
            <person name="Sorelle R.P."/>
            <person name="Sutton A.E."/>
            <person name="Svatek A.F."/>
            <person name="Svetz L.A."/>
            <person name="Tamerisa K.S."/>
            <person name="Taylor T.R."/>
            <person name="Teague B."/>
            <person name="Thomas N."/>
            <person name="Thorn R.D."/>
            <person name="Trejos Z.Y."/>
            <person name="Trevino B.K."/>
            <person name="Ukegbu O.N."/>
            <person name="Urban J.B."/>
            <person name="Vasquez L.I."/>
            <person name="Vera V.A."/>
            <person name="Villasana D.M."/>
            <person name="Wang L."/>
            <person name="Ward-Moore S."/>
            <person name="Warren J.T."/>
            <person name="Wei X."/>
            <person name="White F."/>
            <person name="Williamson A.L."/>
            <person name="Wleczyk R."/>
            <person name="Wooden H.S."/>
            <person name="Wooden S.H."/>
            <person name="Yen J."/>
            <person name="Yoon L."/>
            <person name="Yoon V."/>
            <person name="Zorrilla S.E."/>
            <person name="Nelson D."/>
            <person name="Kucherlapati R."/>
            <person name="Weinstock G."/>
            <person name="Gibbs R.A."/>
        </authorList>
    </citation>
    <scope>NUCLEOTIDE SEQUENCE [LARGE SCALE GENOMIC DNA]</scope>
</reference>
<reference key="3">
    <citation type="journal article" date="2003" name="Mol. Cell. Biol.">
        <title>Activating signal cointegrator 2 belongs to a novel steady-state complex that contains a subset of trithorax group proteins.</title>
        <authorList>
            <person name="Goo Y.-H."/>
            <person name="Sohn Y.C."/>
            <person name="Kim D.-H."/>
            <person name="Kim S.-W."/>
            <person name="Kang M.-J."/>
            <person name="Jung D.-J."/>
            <person name="Kwak E."/>
            <person name="Barlev N.A."/>
            <person name="Berger S.L."/>
            <person name="Chow V.T."/>
            <person name="Roeder R.G."/>
            <person name="Azorsa D.O."/>
            <person name="Meltzer P.S."/>
            <person name="Suh P.-G."/>
            <person name="Song E.J."/>
            <person name="Lee K.-J."/>
            <person name="Lee Y.C."/>
            <person name="Lee J.W."/>
        </authorList>
    </citation>
    <scope>IDENTIFICATION IN THE MLL2/3 COMPLEX</scope>
    <source>
        <tissue>Cervix carcinoma</tissue>
    </source>
</reference>
<reference key="4">
    <citation type="journal article" date="2006" name="Cell">
        <title>Global, in vivo, and site-specific phosphorylation dynamics in signaling networks.</title>
        <authorList>
            <person name="Olsen J.V."/>
            <person name="Blagoev B."/>
            <person name="Gnad F."/>
            <person name="Macek B."/>
            <person name="Kumar C."/>
            <person name="Mortensen P."/>
            <person name="Mann M."/>
        </authorList>
    </citation>
    <scope>PHOSPHORYLATION [LARGE SCALE ANALYSIS] AT SER-3130</scope>
    <scope>IDENTIFICATION BY MASS SPECTROMETRY [LARGE SCALE ANALYSIS]</scope>
    <source>
        <tissue>Cervix carcinoma</tissue>
    </source>
</reference>
<reference key="5">
    <citation type="journal article" date="2006" name="J. Biol. Chem.">
        <title>Identification of the MLL2 complex as a coactivator for estrogen receptor alpha.</title>
        <authorList>
            <person name="Mo R."/>
            <person name="Rao S.M."/>
            <person name="Zhu Y.-J."/>
        </authorList>
    </citation>
    <scope>FUNCTION</scope>
    <scope>IDENTIFICATION IN THE MLL2 COMPLEX</scope>
    <scope>LXXLL MOTIFS</scope>
    <scope>INTERACTION WITH ESR1</scope>
</reference>
<reference key="6">
    <citation type="journal article" date="2006" name="Proc. Natl. Acad. Sci. U.S.A.">
        <title>Coactivator as a target gene specificity determinant for histone H3 lysine 4 methyltransferases.</title>
        <authorList>
            <person name="Lee S."/>
            <person name="Lee D.K."/>
            <person name="Dou Y."/>
            <person name="Lee J."/>
            <person name="Lee B."/>
            <person name="Kwak E."/>
            <person name="Kong Y.Y."/>
            <person name="Lee S.K."/>
            <person name="Roeder R.G."/>
            <person name="Lee J.W."/>
        </authorList>
    </citation>
    <scope>IDENTIFICATION IN THE MLL2/3 (ASCOM) COMPLEX</scope>
</reference>
<reference key="7">
    <citation type="journal article" date="2007" name="J. Biol. Chem.">
        <title>PTIP associates with MLL3- and MLL4-containing histone H3 lysine 4 methyltransferase complex.</title>
        <authorList>
            <person name="Cho Y.-W."/>
            <person name="Hong T."/>
            <person name="Hong S."/>
            <person name="Guo H."/>
            <person name="Yu H."/>
            <person name="Kim D."/>
            <person name="Guszczynski T."/>
            <person name="Dressler G.R."/>
            <person name="Copeland T.D."/>
            <person name="Kalkum M."/>
            <person name="Ge K."/>
        </authorList>
    </citation>
    <scope>FUNCTION</scope>
    <scope>IDENTIFICATION BY MASS SPECTROMETRY</scope>
    <scope>IDENTIFICATION IN THE MLL2/3 COMPLEX</scope>
</reference>
<reference key="8">
    <citation type="journal article" date="2007" name="Nature">
        <title>A histone H3 lysine 27 demethylase regulates animal posterior development.</title>
        <authorList>
            <person name="Lan F."/>
            <person name="Bayliss P.E."/>
            <person name="Rinn J.L."/>
            <person name="Whetstine J.R."/>
            <person name="Wang J.K."/>
            <person name="Chen S."/>
            <person name="Iwase S."/>
            <person name="Alpatov R."/>
            <person name="Issaeva I."/>
            <person name="Canaani E."/>
            <person name="Roberts T.M."/>
            <person name="Chang H.Y."/>
            <person name="Shi Y."/>
        </authorList>
    </citation>
    <scope>IDENTIFICATION IN THE MLL2/3 COMPLEX</scope>
</reference>
<reference key="9">
    <citation type="journal article" date="2007" name="Science">
        <title>ATM and ATR substrate analysis reveals extensive protein networks responsive to DNA damage.</title>
        <authorList>
            <person name="Matsuoka S."/>
            <person name="Ballif B.A."/>
            <person name="Smogorzewska A."/>
            <person name="McDonald E.R. III"/>
            <person name="Hurov K.E."/>
            <person name="Luo J."/>
            <person name="Bakalarski C.E."/>
            <person name="Zhao Z."/>
            <person name="Solimini N."/>
            <person name="Lerenthal Y."/>
            <person name="Shiloh Y."/>
            <person name="Gygi S.P."/>
            <person name="Elledge S.J."/>
        </authorList>
    </citation>
    <scope>IDENTIFICATION BY MASS SPECTROMETRY [LARGE SCALE ANALYSIS]</scope>
    <source>
        <tissue>Embryonic kidney</tissue>
    </source>
</reference>
<reference key="10">
    <citation type="journal article" date="2007" name="Science">
        <title>Demethylation of H3K27 regulates polycomb recruitment and H2A ubiquitination.</title>
        <authorList>
            <person name="Lee M.G."/>
            <person name="Villa R."/>
            <person name="Trojer P."/>
            <person name="Norman J."/>
            <person name="Yan K.P."/>
            <person name="Reinberg D."/>
            <person name="Di Croce L."/>
            <person name="Shiekhattar R."/>
        </authorList>
    </citation>
    <scope>IDENTIFICATION IN THE MLL2/3 COMPLEX</scope>
</reference>
<reference key="11">
    <citation type="journal article" date="2008" name="J. Proteome Res.">
        <title>Combining protein-based IMAC, peptide-based IMAC, and MudPIT for efficient phosphoproteomic analysis.</title>
        <authorList>
            <person name="Cantin G.T."/>
            <person name="Yi W."/>
            <person name="Lu B."/>
            <person name="Park S.K."/>
            <person name="Xu T."/>
            <person name="Lee J.-D."/>
            <person name="Yates J.R. III"/>
        </authorList>
    </citation>
    <scope>PHOSPHORYLATION [LARGE SCALE ANALYSIS] AT SER-4738</scope>
    <scope>IDENTIFICATION BY MASS SPECTROMETRY [LARGE SCALE ANALYSIS]</scope>
    <source>
        <tissue>Cervix carcinoma</tissue>
    </source>
</reference>
<reference key="12">
    <citation type="journal article" date="2008" name="Proc. Natl. Acad. Sci. U.S.A.">
        <title>A quantitative atlas of mitotic phosphorylation.</title>
        <authorList>
            <person name="Dephoure N."/>
            <person name="Zhou C."/>
            <person name="Villen J."/>
            <person name="Beausoleil S.A."/>
            <person name="Bakalarski C.E."/>
            <person name="Elledge S.J."/>
            <person name="Gygi S.P."/>
        </authorList>
    </citation>
    <scope>PHOSPHORYLATION [LARGE SCALE ANALYSIS] AT SER-27; SER-2274; SER-2309; SER-2311; THR-3197 AND SER-4822</scope>
    <scope>IDENTIFICATION BY MASS SPECTROMETRY [LARGE SCALE ANALYSIS]</scope>
    <source>
        <tissue>Cervix carcinoma</tissue>
    </source>
</reference>
<reference key="13">
    <citation type="journal article" date="2009" name="Anal. Chem.">
        <title>Lys-N and trypsin cover complementary parts of the phosphoproteome in a refined SCX-based approach.</title>
        <authorList>
            <person name="Gauci S."/>
            <person name="Helbig A.O."/>
            <person name="Slijper M."/>
            <person name="Krijgsveld J."/>
            <person name="Heck A.J."/>
            <person name="Mohammed S."/>
        </authorList>
    </citation>
    <scope>IDENTIFICATION BY MASS SPECTROMETRY [LARGE SCALE ANALYSIS]</scope>
</reference>
<reference key="14">
    <citation type="journal article" date="2009" name="Sci. Signal.">
        <title>Quantitative phosphoproteomic analysis of T cell receptor signaling reveals system-wide modulation of protein-protein interactions.</title>
        <authorList>
            <person name="Mayya V."/>
            <person name="Lundgren D.H."/>
            <person name="Hwang S.-I."/>
            <person name="Rezaul K."/>
            <person name="Wu L."/>
            <person name="Eng J.K."/>
            <person name="Rodionov V."/>
            <person name="Han D.K."/>
        </authorList>
    </citation>
    <scope>PHOSPHORYLATION [LARGE SCALE ANALYSIS] AT SER-1671; SER-2274; THR-3197; SER-4359 AND SER-4822</scope>
    <scope>IDENTIFICATION BY MASS SPECTROMETRY [LARGE SCALE ANALYSIS]</scope>
    <source>
        <tissue>Leukemic T-cell</tissue>
    </source>
</reference>
<reference key="15">
    <citation type="journal article" date="2009" name="Science">
        <title>Lysine acetylation targets protein complexes and co-regulates major cellular functions.</title>
        <authorList>
            <person name="Choudhary C."/>
            <person name="Kumar C."/>
            <person name="Gnad F."/>
            <person name="Nielsen M.L."/>
            <person name="Rehman M."/>
            <person name="Walther T.C."/>
            <person name="Olsen J.V."/>
            <person name="Mann M."/>
        </authorList>
    </citation>
    <scope>ACETYLATION [LARGE SCALE ANALYSIS] AT LYS-2246; LYS-3079; LYS-3433; LYS-4465 AND LYS-4776</scope>
    <scope>IDENTIFICATION BY MASS SPECTROMETRY [LARGE SCALE ANALYSIS]</scope>
</reference>
<reference key="16">
    <citation type="journal article" date="2010" name="Sci. Signal.">
        <title>Quantitative phosphoproteomics reveals widespread full phosphorylation site occupancy during mitosis.</title>
        <authorList>
            <person name="Olsen J.V."/>
            <person name="Vermeulen M."/>
            <person name="Santamaria A."/>
            <person name="Kumar C."/>
            <person name="Miller M.L."/>
            <person name="Jensen L.J."/>
            <person name="Gnad F."/>
            <person name="Cox J."/>
            <person name="Jensen T.S."/>
            <person name="Nigg E.A."/>
            <person name="Brunak S."/>
            <person name="Mann M."/>
        </authorList>
    </citation>
    <scope>PHOSPHORYLATION [LARGE SCALE ANALYSIS] AT SER-1606; THR-3197; SER-3199; SER-4215; SER-4359 AND SER-4738</scope>
    <scope>IDENTIFICATION BY MASS SPECTROMETRY [LARGE SCALE ANALYSIS]</scope>
    <source>
        <tissue>Cervix carcinoma</tissue>
    </source>
</reference>
<reference key="17">
    <citation type="journal article" date="2011" name="Sci. Signal.">
        <title>System-wide temporal characterization of the proteome and phosphoproteome of human embryonic stem cell differentiation.</title>
        <authorList>
            <person name="Rigbolt K.T."/>
            <person name="Prokhorova T.A."/>
            <person name="Akimov V."/>
            <person name="Henningsen J."/>
            <person name="Johansen P.T."/>
            <person name="Kratchmarova I."/>
            <person name="Kassem M."/>
            <person name="Mann M."/>
            <person name="Olsen J.V."/>
            <person name="Blagoev B."/>
        </authorList>
    </citation>
    <scope>PHOSPHORYLATION [LARGE SCALE ANALYSIS] AT SER-1671; SER-2274 AND SER-4738</scope>
    <scope>IDENTIFICATION BY MASS SPECTROMETRY [LARGE SCALE ANALYSIS]</scope>
</reference>
<reference key="18">
    <citation type="journal article" date="2013" name="J. Proteome Res.">
        <title>Toward a comprehensive characterization of a human cancer cell phosphoproteome.</title>
        <authorList>
            <person name="Zhou H."/>
            <person name="Di Palma S."/>
            <person name="Preisinger C."/>
            <person name="Peng M."/>
            <person name="Polat A.N."/>
            <person name="Heck A.J."/>
            <person name="Mohammed S."/>
        </authorList>
    </citation>
    <scope>PHOSPHORYLATION [LARGE SCALE ANALYSIS] AT SER-1606; SER-1671; SER-1820; SER-1834; THR-1843; THR-2240; SER-2260; SER-2274; SER-2640; SER-3130; SER-3199; SER-4359; SER-4738; SER-4822 AND SER-4849</scope>
    <scope>IDENTIFICATION BY MASS SPECTROMETRY [LARGE SCALE ANALYSIS]</scope>
    <source>
        <tissue>Cervix carcinoma</tissue>
        <tissue>Erythroleukemia</tissue>
    </source>
</reference>
<reference key="19">
    <citation type="journal article" date="2013" name="Mol. Cell. Biol.">
        <title>Quantitative dissection and stoichiometry determination of the human SET1/MLL histone methyltransferase complexes.</title>
        <authorList>
            <person name="van Nuland R."/>
            <person name="Smits A.H."/>
            <person name="Pallaki P."/>
            <person name="Jansen P.W."/>
            <person name="Vermeulen M."/>
            <person name="Timmers H.T."/>
        </authorList>
    </citation>
    <scope>IDENTIFICATION IN MLL2 COMPLEX</scope>
    <scope>SUBCELLULAR LOCATION</scope>
</reference>
<reference key="20">
    <citation type="journal article" date="2014" name="J. Proteomics">
        <title>An enzyme assisted RP-RPLC approach for in-depth analysis of human liver phosphoproteome.</title>
        <authorList>
            <person name="Bian Y."/>
            <person name="Song C."/>
            <person name="Cheng K."/>
            <person name="Dong M."/>
            <person name="Wang F."/>
            <person name="Huang J."/>
            <person name="Sun D."/>
            <person name="Wang L."/>
            <person name="Ye M."/>
            <person name="Zou H."/>
        </authorList>
    </citation>
    <scope>PHOSPHORYLATION [LARGE SCALE ANALYSIS] AT SER-1151; THR-1195; SER-1249; SER-2239 AND SER-4738</scope>
    <scope>IDENTIFICATION BY MASS SPECTROMETRY [LARGE SCALE ANALYSIS]</scope>
    <source>
        <tissue>Liver</tissue>
    </source>
</reference>
<reference key="21">
    <citation type="journal article" date="2014" name="Mol. Cell. Proteomics">
        <title>Immunoaffinity enrichment and mass spectrometry analysis of protein methylation.</title>
        <authorList>
            <person name="Guo A."/>
            <person name="Gu H."/>
            <person name="Zhou J."/>
            <person name="Mulhern D."/>
            <person name="Wang Y."/>
            <person name="Lee K.A."/>
            <person name="Yang V."/>
            <person name="Aguiar M."/>
            <person name="Kornhauser J."/>
            <person name="Jia X."/>
            <person name="Ren J."/>
            <person name="Beausoleil S.A."/>
            <person name="Silva J.C."/>
            <person name="Vemulapalli V."/>
            <person name="Bedford M.T."/>
            <person name="Comb M.J."/>
        </authorList>
    </citation>
    <scope>METHYLATION [LARGE SCALE ANALYSIS] AT ARG-3727</scope>
    <scope>IDENTIFICATION BY MASS SPECTROMETRY [LARGE SCALE ANALYSIS]</scope>
    <source>
        <tissue>Colon carcinoma</tissue>
    </source>
</reference>
<reference key="22">
    <citation type="journal article" date="2014" name="Nat. Struct. Mol. Biol.">
        <title>Uncovering global SUMOylation signaling networks in a site-specific manner.</title>
        <authorList>
            <person name="Hendriks I.A."/>
            <person name="D'Souza R.C."/>
            <person name="Yang B."/>
            <person name="Verlaan-de Vries M."/>
            <person name="Mann M."/>
            <person name="Vertegaal A.C."/>
        </authorList>
    </citation>
    <scope>SUMOYLATION [LARGE SCALE ANALYSIS] AT LYS-4756</scope>
    <scope>IDENTIFICATION BY MASS SPECTROMETRY [LARGE SCALE ANALYSIS]</scope>
</reference>
<reference key="23">
    <citation type="journal article" date="2017" name="Nat. Struct. Mol. Biol.">
        <title>Site-specific mapping of the human SUMO proteome reveals co-modification with phosphorylation.</title>
        <authorList>
            <person name="Hendriks I.A."/>
            <person name="Lyon D."/>
            <person name="Young C."/>
            <person name="Jensen L.J."/>
            <person name="Vertegaal A.C."/>
            <person name="Nielsen M.L."/>
        </authorList>
    </citation>
    <scope>SUMOYLATION [LARGE SCALE ANALYSIS] AT LYS-4756 AND LYS-4880</scope>
    <scope>IDENTIFICATION BY MASS SPECTROMETRY [LARGE SCALE ANALYSIS]</scope>
</reference>
<reference key="24">
    <citation type="journal article" date="2015" name="J. Biol. Chem.">
        <title>Biochemical reconstitution and phylogenetic comparison of human SET1 family core complexes involved in histone methylation.</title>
        <authorList>
            <person name="Shinsky S.A."/>
            <person name="Monteith K.E."/>
            <person name="Viggiano S."/>
            <person name="Cosgrove M.S."/>
        </authorList>
    </citation>
    <scope>FUNCTION</scope>
    <scope>CATALYTIC ACTIVITY</scope>
    <scope>SUBUNIT</scope>
    <scope>MUTAGENESIS OF ASN-5474</scope>
</reference>
<reference evidence="39" key="25">
    <citation type="journal article" date="2012" name="J. Biol. Chem.">
        <title>Structural basis for WDR5 interaction (Win) motif recognition in human SET1 family histone methyltransferases.</title>
        <authorList>
            <person name="Dharmarajan V."/>
            <person name="Lee J.H."/>
            <person name="Patel A."/>
            <person name="Skalnik D.G."/>
            <person name="Cosgrove M.S."/>
        </authorList>
    </citation>
    <scope>X-RAY CRYSTALLOGRAPHY (1.91 ANGSTROMS) OF 5333-5346 IN COMPLEX WITH WDR5</scope>
    <scope>INTERACTION WITH WDR5</scope>
    <scope>MOTIF WIN</scope>
</reference>
<reference evidence="38" key="26">
    <citation type="journal article" date="2012" name="Nucleic Acids Res.">
        <title>The plasticity of WDR5 peptide-binding cleft enables the binding of the SET1 family of histone methyltransferases.</title>
        <authorList>
            <person name="Zhang P."/>
            <person name="Lee H."/>
            <person name="Brunzelle J.S."/>
            <person name="Couture J.F."/>
        </authorList>
    </citation>
    <scope>X-RAY CRYSTALLOGRAPHY (1.40 ANGSTROMS) OF 5337-5347 IN COMPLEX WITH WDR5</scope>
    <scope>INTERACTION WITH WDR5</scope>
    <scope>MOTIF WIN</scope>
</reference>
<reference key="27">
    <citation type="journal article" date="2010" name="Nat. Genet.">
        <title>Exome sequencing identifies MLL2 mutations as a cause of Kabuki syndrome.</title>
        <authorList>
            <person name="Ng S.B."/>
            <person name="Bigham A.W."/>
            <person name="Buckingham K.J."/>
            <person name="Hannibal M.C."/>
            <person name="McMillin M.J."/>
            <person name="Gildersleeve H.I."/>
            <person name="Beck A.E."/>
            <person name="Tabor H.K."/>
            <person name="Cooper G.M."/>
            <person name="Mefford H.C."/>
            <person name="Lee C."/>
            <person name="Turner E.H."/>
            <person name="Smith J.D."/>
            <person name="Rieder M.J."/>
            <person name="Yoshiura K."/>
            <person name="Matsumoto N."/>
            <person name="Ohta T."/>
            <person name="Niikawa N."/>
            <person name="Nickerson D.A."/>
            <person name="Bamshad M.J."/>
            <person name="Shendure J."/>
        </authorList>
    </citation>
    <scope>VARIANTS KABUK1 PHE-5109; HIS-5179; HIS-5214; LEU-5340 AND MET-5464</scope>
    <scope>INVOLVEMENT IN KABUK1</scope>
</reference>
<reference key="28">
    <citation type="journal article" date="2011" name="Am. J. Med. Genet. A">
        <title>Spectrum of MLL2 (ALR) mutations in 110 cases of Kabuki syndrome.</title>
        <authorList>
            <person name="Hannibal M.C."/>
            <person name="Buckingham K.J."/>
            <person name="Ng S.B."/>
            <person name="Ming J.E."/>
            <person name="Beck A.E."/>
            <person name="McMillin M.J."/>
            <person name="Gildersleeve H.I."/>
            <person name="Bigham A.W."/>
            <person name="Tabor H.K."/>
            <person name="Mefford H.C."/>
            <person name="Cook J."/>
            <person name="Yoshiura K."/>
            <person name="Matsumoto T."/>
            <person name="Matsumoto N."/>
            <person name="Miyake N."/>
            <person name="Tonoki H."/>
            <person name="Naritomi K."/>
            <person name="Kaname T."/>
            <person name="Nagai T."/>
            <person name="Ohashi H."/>
            <person name="Kurosawa K."/>
            <person name="Hou J.W."/>
            <person name="Ohta T."/>
            <person name="Liang D."/>
            <person name="Sudo A."/>
            <person name="Morris C.A."/>
            <person name="Banka S."/>
            <person name="Black G.C."/>
            <person name="Clayton-Smith J."/>
            <person name="Nickerson D.A."/>
            <person name="Zackai E.H."/>
            <person name="Shaikh T.H."/>
            <person name="Donnai D."/>
            <person name="Niikawa N."/>
            <person name="Shendure J."/>
            <person name="Bamshad M.J."/>
        </authorList>
    </citation>
    <scope>VARIANTS KABUK1 LEU-1388; ARG-1430; TYR-1471; CYS-5048; PHE-5109; HIS-5179; CYS-5214; HIS-5214; LEU-5340; MET-5464 AND THR-5471</scope>
</reference>
<reference key="29">
    <citation type="journal article" date="2011" name="Hum. Genet.">
        <title>A mutation screen in patients with Kabuki syndrome.</title>
        <authorList>
            <person name="Li Y."/>
            <person name="Boegershausen N."/>
            <person name="Alanay Y."/>
            <person name="Simsek Kiper P.O."/>
            <person name="Plume N."/>
            <person name="Keupp K."/>
            <person name="Pohl E."/>
            <person name="Pawlik B."/>
            <person name="Rachwalski M."/>
            <person name="Milz E."/>
            <person name="Thoenes M."/>
            <person name="Albrecht B."/>
            <person name="Prott E.C."/>
            <person name="Lehmkuehler M."/>
            <person name="Demuth S."/>
            <person name="Utine G.E."/>
            <person name="Boduroglu K."/>
            <person name="Frankenbusch K."/>
            <person name="Borck G."/>
            <person name="Gillessen-Kaesbach G."/>
            <person name="Yigit G."/>
            <person name="Wieczorek D."/>
            <person name="Wollnik B."/>
        </authorList>
    </citation>
    <scope>VARIANTS KABUK1 LEU-543; GLN-647; MET-1192; ARG-1453; VAL-1718; GLN-5154 AND PHE-5498</scope>
</reference>
<reference key="30">
    <citation type="journal article" date="2011" name="Hum. Mutat.">
        <title>MLL2 mutation spectrum in 45 patients with Kabuki syndrome.</title>
        <authorList>
            <person name="Paulussen A.D."/>
            <person name="Stegmann A.P."/>
            <person name="Blok M.J."/>
            <person name="Tserpelis D."/>
            <person name="Posma-Velter C."/>
            <person name="Detisch Y."/>
            <person name="Smeets E.E."/>
            <person name="Wagemans A."/>
            <person name="Schrander J.J."/>
            <person name="van den Boogaard M.J."/>
            <person name="van der Smagt J."/>
            <person name="van Haeringen A."/>
            <person name="Stolte-Dijkstra I."/>
            <person name="Kerstjens-Frederikse W.S."/>
            <person name="Mancini G.M."/>
            <person name="Wessels M.W."/>
            <person name="Hennekam R.C."/>
            <person name="Vreeburg M."/>
            <person name="Geraedts J."/>
            <person name="de Ravel T."/>
            <person name="Fryns J.P."/>
            <person name="Smeets H.J."/>
            <person name="Devriendt K."/>
            <person name="Schrander-Stumpel C.T."/>
        </authorList>
    </citation>
    <scope>VARIANTS KABUK1 CYS-5210 AND ASP-5428</scope>
    <scope>VARIANTS THR-692; LEU-813; SER-2382; CYS-2460; LEU-2557; VAL-3398; GLY-3419 AND SER-4357</scope>
</reference>
<reference key="31">
    <citation type="journal article" date="2011" name="Orphanet J. Rare Dis.">
        <title>Mutation spectrum of MLL2 in a cohort of Kabuki syndrome patients.</title>
        <authorList>
            <person name="Micale L."/>
            <person name="Augello B."/>
            <person name="Fusco C."/>
            <person name="Selicorni A."/>
            <person name="Loviglio M.N."/>
            <person name="Silengo M.C."/>
            <person name="Reymond A."/>
            <person name="Gumiero B."/>
            <person name="Zucchetti F."/>
            <person name="D'Addetta E.V."/>
            <person name="Belligni E."/>
            <person name="Calcagni A."/>
            <person name="Digilio M.C."/>
            <person name="Dallapiccola B."/>
            <person name="Faravelli F."/>
            <person name="Forzano F."/>
            <person name="Accadia M."/>
            <person name="Bonfante A."/>
            <person name="Clementi M."/>
            <person name="Daolio C."/>
            <person name="Douzgou S."/>
            <person name="Ferrari P."/>
            <person name="Fischetto R."/>
            <person name="Garavelli L."/>
            <person name="Lapi E."/>
            <person name="Mattina T."/>
            <person name="Melis D."/>
            <person name="Patricelli M.G."/>
            <person name="Priolo M."/>
            <person name="Prontera P."/>
            <person name="Renieri A."/>
            <person name="Mencarelli M.A."/>
            <person name="Scarano G."/>
            <person name="della Monica M."/>
            <person name="Toschi B."/>
            <person name="Turolla L."/>
            <person name="Vancini A."/>
            <person name="Zatterale A."/>
            <person name="Gabrielli O."/>
            <person name="Zelante L."/>
            <person name="Merla G."/>
        </authorList>
    </citation>
    <scope>VARIANTS KABUK1 223-TYR--ASN-5537 DEL; 641-GLU--ASN-5537 DEL; GLN-1258; VAL-1417; MET-1418; 1473-TRP--ASN-5537 DEL; ARG-1522; 2099-ARG--ASN-5537 DEL; 2416-GLN--ASN-5537 DEL; 2635-ARG--ASN-5537 DEL; THR-2841; 3379-GLN--ASN-5537 DEL; 3614-SER--ASN-5537 DEL; 3707-ARG--ASN-5537 DEL; 3757-GLN--ASN-5537 DEL; 3812-GLN--ASN-5537 DEL; 4026-GLN--ASN-5537 DEL; 4092-GLN--ASN-5537 DEL; 4556-LYS--ASN-5537 DEL; 5027-ARG--ASN-5537 DEL; GLU-5028; VAL-5034; PRO-5059 AND GLN-5340</scope>
</reference>
<reference key="32">
    <citation type="journal article" date="2012" name="Eur. J. Hum. Genet.">
        <title>How genetically heterogeneous is Kabuki syndrome?: MLL2 testing in 116 patients, review and analyses of mutation and phenotypic spectrum.</title>
        <authorList>
            <person name="Banka S."/>
            <person name="Veeramachaneni R."/>
            <person name="Reardon W."/>
            <person name="Howa rd E."/>
            <person name="Bunstone S."/>
            <person name="Ragge N."/>
            <person name="Parker M.J."/>
            <person name="Crow Y.J."/>
            <person name="Kerr B."/>
            <person name="Kingston H."/>
            <person name="Metcalfe K."/>
            <person name="Chandler K."/>
            <person name="Magee A."/>
            <person name="Stewart F."/>
            <person name="McConnell V.P."/>
            <person name="Donnelly D.E."/>
            <person name="Berland S."/>
            <person name="Houge G."/>
            <person name="Morton J.E."/>
            <person name="Oley C."/>
            <person name="Revencu N."/>
            <person name="Park S.M."/>
            <person name="Davies S.J."/>
            <person name="Fry A.E."/>
            <person name="Lynch S.A."/>
            <person name="Gill H."/>
            <person name="Schweiger S."/>
            <person name="Lam W.W."/>
            <person name="Tolmie J."/>
            <person name="Mohammed S.N."/>
            <person name="Hobson E."/>
            <person name="Smith A."/>
            <person name="Blyth M."/>
            <person name="Bennett C."/>
            <person name="Vasudevan P.C."/>
            <person name="Garcia-Minaur S."/>
            <person name="Henderson A."/>
            <person name="Goodship J."/>
            <person name="Wright M.J."/>
            <person name="Fisher R."/>
            <person name="Gibbons R."/>
            <person name="Price S.M."/>
            <person name="C de Silva D."/>
            <person name="Temple I.K."/>
            <person name="Collins A.L."/>
            <person name="Lachlan K."/>
            <person name="Elmslie F."/>
            <person name="McEntagart M."/>
            <person name="Castle B."/>
            <person name="Clayton-Smith J."/>
            <person name="Black G.C."/>
            <person name="Donnai D."/>
        </authorList>
    </citation>
    <scope>VARIANTS KABUK1 LEU-337; LEU-4353; VAL-5047; CYS-5048; CYS-5214; THR-5471 AND TYR-5481</scope>
</reference>
<reference key="33">
    <citation type="journal article" date="2013" name="Am. J. Med. Genet. A">
        <title>MLL2 and KDM6A mutations in patients with Kabuki syndrome.</title>
        <authorList>
            <person name="Miyake N."/>
            <person name="Koshimizu E."/>
            <person name="Okamoto N."/>
            <person name="Mizuno S."/>
            <person name="Ogata T."/>
            <person name="Nagai T."/>
            <person name="Kosho T."/>
            <person name="Ohashi H."/>
            <person name="Kato M."/>
            <person name="Sasaki G."/>
            <person name="Mabe H."/>
            <person name="Watanabe Y."/>
            <person name="Yoshino M."/>
            <person name="Matsuishi T."/>
            <person name="Takanashi J."/>
            <person name="Shotelersuk V."/>
            <person name="Tekin M."/>
            <person name="Ochi N."/>
            <person name="Kubota M."/>
            <person name="Ito N."/>
            <person name="Ihara K."/>
            <person name="Hara T."/>
            <person name="Tonoki H."/>
            <person name="Ohta T."/>
            <person name="Saito K."/>
            <person name="Matsuo M."/>
            <person name="Urano M."/>
            <person name="Enokizono T."/>
            <person name="Sato A."/>
            <person name="Tanaka H."/>
            <person name="Ogawa A."/>
            <person name="Fujita T."/>
            <person name="Hiraki Y."/>
            <person name="Kitanaka S."/>
            <person name="Matsubara Y."/>
            <person name="Makita T."/>
            <person name="Taguri M."/>
            <person name="Nakashima M."/>
            <person name="Tsurusaki Y."/>
            <person name="Saitsu H."/>
            <person name="Yoshiura K."/>
            <person name="Matsumoto N."/>
            <person name="Niikawa N."/>
        </authorList>
    </citation>
    <scope>VARIANTS KABUK1 ARG-1376; CYS-1423; GLY-1445; PHE-1526; CYS-5030; GLY-5040; CYS-5048; HIS-5048; GLN-5154; HIS-5179; ARG-5189 AND GLN-5351</scope>
</reference>
<reference key="34">
    <citation type="journal article" date="2014" name="J. Hum. Genet.">
        <title>Identification of KMT2D and KDM6A mutations by exome sequencing in Korean patients with Kabuki syndrome.</title>
        <authorList>
            <person name="Cheon C.K."/>
            <person name="Sohn Y.B."/>
            <person name="Ko J.M."/>
            <person name="Lee Y.J."/>
            <person name="Song J.S."/>
            <person name="Moon J.W."/>
            <person name="Yang B.K."/>
            <person name="Ha I.S."/>
            <person name="Bae E.J."/>
            <person name="Jin H.S."/>
            <person name="Jeong S.Y."/>
        </authorList>
    </citation>
    <scope>VARIANTS KABUK1 PHE-1424 AND GLN-4420</scope>
</reference>
<reference key="35">
    <citation type="journal article" date="2013" name="Clin. Genet.">
        <title>MLL2 mutation detection in 86 patients with Kabuki syndrome: a genotype-phenotype study.</title>
        <authorList>
            <person name="Makrythanasis P."/>
            <person name="van Bon B.W."/>
            <person name="Steehouwer M."/>
            <person name="Rodriguez-Santiago B."/>
            <person name="Simpson M."/>
            <person name="Dias P."/>
            <person name="Anderlid B.M."/>
            <person name="Arts P."/>
            <person name="Bhat M."/>
            <person name="Augello B."/>
            <person name="Biamino E."/>
            <person name="Bongers E.M."/>
            <person name="Del Campo M."/>
            <person name="Cordeiro I."/>
            <person name="Cueto-Gonzalez A.M."/>
            <person name="Cusco I."/>
            <person name="Deshpande C."/>
            <person name="Frysira E."/>
            <person name="Izatt L."/>
            <person name="Flores R."/>
            <person name="Galan E."/>
            <person name="Gener B."/>
            <person name="Gilissen C."/>
            <person name="Granneman S.M."/>
            <person name="Hoyer J."/>
            <person name="Yntema H.G."/>
            <person name="Kets C.M."/>
            <person name="Koolen D.A."/>
            <person name="Marcelis C.L."/>
            <person name="Medeira A."/>
            <person name="Micale L."/>
            <person name="Mohammed S."/>
            <person name="de Munnik S.A."/>
            <person name="Nordgren A."/>
            <person name="Psoni S."/>
            <person name="Reardon W."/>
            <person name="Revencu N."/>
            <person name="Roscioli T."/>
            <person name="Ruiterkamp-Versteeg M."/>
            <person name="Santos H.G."/>
            <person name="Schoumans J."/>
            <person name="Schuurs-Hoeijmakers J.H."/>
            <person name="Silengo M.C."/>
            <person name="Toledo L."/>
            <person name="Vendrell T."/>
            <person name="van der Burgt I."/>
            <person name="van Lier B."/>
            <person name="Zweier C."/>
            <person name="Reymond A."/>
            <person name="Trembath R.C."/>
            <person name="Perez-Jurado L."/>
            <person name="Dupont J."/>
            <person name="de Vries B.B."/>
            <person name="Brunner H.G."/>
            <person name="Veltman J.A."/>
            <person name="Merla G."/>
            <person name="Antonarakis S.E."/>
            <person name="Hoischen A."/>
        </authorList>
    </citation>
    <scope>VARIANTS KABUK1 HIS-170; LEU-170; GLN-647; ARG-1380; ARG-1471; ARG-3876; SER-3897; CYS-5030; CYS-5048; HIS-5048; CYS-5214; TRP-5432 AND PHE-5498</scope>
    <scope>VARIANTS LEU-2557; LEU-2652 AND PRO-4010</scope>
</reference>
<reference key="36">
    <citation type="journal article" date="2020" name="Am. J. Med. Genet. A">
        <title>Holoprosencephaly in Kabuki syndrome.</title>
        <authorList>
            <person name="Daly T."/>
            <person name="Roberts A."/>
            <person name="Yang E."/>
            <person name="Mochida G.H."/>
            <person name="Bodamer O."/>
        </authorList>
    </citation>
    <scope>VARIANT KABUK1 2099-ARG--ASN-5537 DEL</scope>
</reference>
<reference key="37">
    <citation type="journal article" date="2020" name="Am. J. Med. Genet. A">
        <title>Phenotypic expansion of KMT2D-related disorder: Beyond Kabuki syndrome.</title>
        <authorList>
            <person name="Baldridge D."/>
            <person name="Spillmann R.C."/>
            <person name="Wegner D.J."/>
            <person name="Wambach J.A."/>
            <person name="White F.V."/>
            <person name="Sisco K."/>
            <person name="Toler T.L."/>
            <person name="Dickson P.I."/>
            <person name="Cole F.S."/>
            <person name="Shashi V."/>
            <person name="Grange D.K."/>
        </authorList>
    </citation>
    <scope>VARIANTS BCAHH PRO-3525; VAL-3528; PRO-3541 AND VAL-3564</scope>
    <scope>INVOLVEMENT IN BCAHH</scope>
</reference>
<reference key="38">
    <citation type="journal article" date="2020" name="Genet. Med.">
        <title>A restricted spectrum of missense KMT2D variants cause a multiple malformations disorder distinct from Kabuki syndrome.</title>
        <authorList>
            <consortium name="Genomics England Research Consortium"/>
            <person name="Cuvertino S."/>
            <person name="Hartill V."/>
            <person name="Colyer A."/>
            <person name="Garner T."/>
            <person name="Nair N."/>
            <person name="Al-Gazali L."/>
            <person name="Canham N."/>
            <person name="Faundes V."/>
            <person name="Flinter F."/>
            <person name="Hertecant J."/>
            <person name="Holder-Espinasse M."/>
            <person name="Jackson B."/>
            <person name="Lynch S.A."/>
            <person name="Nadat F."/>
            <person name="Narasimhan V.M."/>
            <person name="Peckham M."/>
            <person name="Sellers R."/>
            <person name="Seri M."/>
            <person name="Montanari F."/>
            <person name="Southgate L."/>
            <person name="Squeo G.M."/>
            <person name="Trembath R."/>
            <person name="van Heel D."/>
            <person name="Venuto S."/>
            <person name="Weisberg D."/>
            <person name="Stals K."/>
            <person name="Ellard S."/>
            <person name="Barton A."/>
            <person name="Kimber S.J."/>
            <person name="Sheridan E."/>
            <person name="Merla G."/>
            <person name="Stevens A."/>
            <person name="Johnson C.A."/>
            <person name="Banka S."/>
        </authorList>
    </citation>
    <scope>VARIANTS BCAHH VAL-3528; PRO-3542; VAL-3553; GLN-3582 AND TRP-3582</scope>
    <scope>INVOLVEMENT IN BCAHH</scope>
    <scope>CHARACTERIZATION OF VARIANTS BCAHH PRO-3542; VAL-3553 AND TRP-3582</scope>
</reference>
<reference key="39">
    <citation type="journal article" date="2020" name="Genet. Med.">
        <title>Correction: A restricted spectrum of missense KMT2D variants cause a multiple malformations disorder distinct from Kabuki syndrome.</title>
        <authorList>
            <consortium name="Genomics England Research Consortium"/>
            <person name="Cuvertino S."/>
            <person name="Hartill V."/>
            <person name="Colyer A."/>
            <person name="Garner T."/>
            <person name="Nair N."/>
            <person name="Al-Gazali L."/>
            <person name="Canham N."/>
            <person name="Faundes V."/>
            <person name="Flinter F."/>
            <person name="Hertecant J."/>
            <person name="Holder-Espinasse M."/>
            <person name="Jackson B."/>
            <person name="Lynch S.A."/>
            <person name="Nadat F."/>
            <person name="Narasimhan V.M."/>
            <person name="Peckham M."/>
            <person name="Sellers R."/>
            <person name="Seri M."/>
            <person name="Montanari F."/>
            <person name="Southgate L."/>
            <person name="Squeo G.M."/>
            <person name="Trembath R."/>
            <person name="van Heel D."/>
            <person name="Venuto S."/>
            <person name="Weisberg D."/>
            <person name="Stals K."/>
            <person name="Ellard S."/>
            <person name="Barton A."/>
            <person name="Kimber S.J."/>
            <person name="Sheridan E."/>
            <person name="Merla G."/>
            <person name="Stevens A."/>
            <person name="Johnson C.A."/>
            <person name="Banka S."/>
        </authorList>
    </citation>
    <scope>ERRATUM OF PUBMED:31949313</scope>
</reference>
<reference key="40">
    <citation type="journal article" date="2022" name="Am. J. Med. Genet. A">
        <title>Refining the clinical phenotype associated with missense variants in exons 38 and 39 of KMT2D.</title>
        <authorList>
            <person name="Tharreau M."/>
            <person name="Garde A."/>
            <person name="Marlin S."/>
            <person name="Morel G."/>
            <person name="Ernest S."/>
            <person name="Nambot S."/>
            <person name="Duffourd Y."/>
            <person name="Ternoy N."/>
            <person name="Duvillard C."/>
            <person name="Banka S."/>
            <person name="Philippe C."/>
            <person name="Thauvin-Robinet C."/>
            <person name="Mau-Them F.T."/>
            <person name="Faivre L."/>
        </authorList>
    </citation>
    <scope>VARIANTS BCAHH GLY-3569 AND GLN-3582</scope>
</reference>
<name>KMT2D_HUMAN</name>
<proteinExistence type="evidence at protein level"/>
<feature type="chain" id="PRO_0000124878" description="Histone-lysine N-methyltransferase 2D">
    <location>
        <begin position="1"/>
        <end position="5537"/>
    </location>
</feature>
<feature type="repeat" description="1">
    <location>
        <begin position="442"/>
        <end position="446"/>
    </location>
</feature>
<feature type="repeat" description="2">
    <location>
        <begin position="460"/>
        <end position="464"/>
    </location>
</feature>
<feature type="repeat" description="3">
    <location>
        <begin position="469"/>
        <end position="473"/>
    </location>
</feature>
<feature type="repeat" description="4">
    <location>
        <begin position="496"/>
        <end position="500"/>
    </location>
</feature>
<feature type="repeat" description="5">
    <location>
        <begin position="504"/>
        <end position="508"/>
    </location>
</feature>
<feature type="repeat" description="6">
    <location>
        <begin position="521"/>
        <end position="525"/>
    </location>
</feature>
<feature type="repeat" description="7">
    <location>
        <begin position="555"/>
        <end position="559"/>
    </location>
</feature>
<feature type="repeat" description="8">
    <location>
        <begin position="564"/>
        <end position="568"/>
    </location>
</feature>
<feature type="repeat" description="9">
    <location>
        <begin position="573"/>
        <end position="577"/>
    </location>
</feature>
<feature type="repeat" description="10">
    <location>
        <begin position="582"/>
        <end position="586"/>
    </location>
</feature>
<feature type="repeat" description="11">
    <location>
        <begin position="609"/>
        <end position="613"/>
    </location>
</feature>
<feature type="repeat" description="12">
    <location>
        <begin position="618"/>
        <end position="622"/>
    </location>
</feature>
<feature type="repeat" description="13">
    <location>
        <begin position="627"/>
        <end position="631"/>
    </location>
</feature>
<feature type="repeat" description="14">
    <location>
        <begin position="645"/>
        <end position="649"/>
    </location>
</feature>
<feature type="repeat" description="15">
    <location>
        <begin position="663"/>
        <end position="667"/>
    </location>
</feature>
<feature type="domain" description="FYR N-terminal" evidence="8">
    <location>
        <begin position="5175"/>
        <end position="5235"/>
    </location>
</feature>
<feature type="domain" description="FYR C-terminal" evidence="9">
    <location>
        <begin position="5236"/>
        <end position="5321"/>
    </location>
</feature>
<feature type="domain" description="SET" evidence="7">
    <location>
        <begin position="5397"/>
        <end position="5513"/>
    </location>
</feature>
<feature type="domain" description="Post-SET" evidence="5">
    <location>
        <begin position="5521"/>
        <end position="5537"/>
    </location>
</feature>
<feature type="zinc finger region" description="C2HC pre-PHD-type 1; degenerate" evidence="10">
    <location>
        <begin position="104"/>
        <end position="149"/>
    </location>
</feature>
<feature type="zinc finger region" description="PHD-type 1" evidence="10">
    <location>
        <begin position="170"/>
        <end position="218"/>
    </location>
</feature>
<feature type="zinc finger region" description="PHD-type 2" evidence="4">
    <location>
        <begin position="226"/>
        <end position="276"/>
    </location>
</feature>
<feature type="zinc finger region" description="RING-type 1; atypical" evidence="6">
    <location>
        <begin position="229"/>
        <end position="274"/>
    </location>
</feature>
<feature type="zinc finger region" description="PHD-type 3" evidence="4">
    <location>
        <begin position="273"/>
        <end position="323"/>
    </location>
</feature>
<feature type="zinc finger region" description="RING-type 2; degenerate" evidence="6">
    <location>
        <begin position="276"/>
        <end position="321"/>
    </location>
</feature>
<feature type="zinc finger region" description="PHD-type 4" evidence="4">
    <location>
        <begin position="1377"/>
        <end position="1430"/>
    </location>
</feature>
<feature type="zinc finger region" description="PHD-type 5" evidence="4">
    <location>
        <begin position="1427"/>
        <end position="1477"/>
    </location>
</feature>
<feature type="zinc finger region" description="PHD-type 6" evidence="4">
    <location>
        <begin position="1504"/>
        <end position="1559"/>
    </location>
</feature>
<feature type="zinc finger region" description="RING-type 3; atypical" evidence="6">
    <location>
        <begin position="1507"/>
        <end position="1557"/>
    </location>
</feature>
<feature type="zinc finger region" description="C2HC pre-PHD-type 2" evidence="10">
    <location>
        <begin position="5029"/>
        <end position="5069"/>
    </location>
</feature>
<feature type="zinc finger region" description="PHD-type 7" evidence="10">
    <location>
        <begin position="5090"/>
        <end position="5137"/>
    </location>
</feature>
<feature type="region of interest" description="Disordered" evidence="11">
    <location>
        <begin position="1"/>
        <end position="60"/>
    </location>
</feature>
<feature type="region of interest" description="Disordered" evidence="11">
    <location>
        <begin position="368"/>
        <end position="387"/>
    </location>
</feature>
<feature type="region of interest" description="Disordered" evidence="11">
    <location>
        <begin position="393"/>
        <end position="416"/>
    </location>
</feature>
<feature type="region of interest" description="Disordered" evidence="11">
    <location>
        <begin position="436"/>
        <end position="1331"/>
    </location>
</feature>
<feature type="region of interest" description="15 X 5 AA repeats of S/P-P-P-E/P-E/A">
    <location>
        <begin position="439"/>
        <end position="668"/>
    </location>
</feature>
<feature type="region of interest" description="Disordered" evidence="11">
    <location>
        <begin position="1340"/>
        <end position="1359"/>
    </location>
</feature>
<feature type="region of interest" description="Disordered" evidence="11">
    <location>
        <begin position="1610"/>
        <end position="1767"/>
    </location>
</feature>
<feature type="region of interest" description="Disordered" evidence="11">
    <location>
        <begin position="1793"/>
        <end position="1889"/>
    </location>
</feature>
<feature type="region of interest" description="Disordered" evidence="11">
    <location>
        <begin position="1904"/>
        <end position="2002"/>
    </location>
</feature>
<feature type="region of interest" description="Disordered" evidence="11">
    <location>
        <begin position="2165"/>
        <end position="2683"/>
    </location>
</feature>
<feature type="region of interest" description="Disordered" evidence="11">
    <location>
        <begin position="2697"/>
        <end position="2814"/>
    </location>
</feature>
<feature type="region of interest" description="Disordered" evidence="11">
    <location>
        <begin position="2835"/>
        <end position="2996"/>
    </location>
</feature>
<feature type="region of interest" description="Disordered" evidence="11">
    <location>
        <begin position="3078"/>
        <end position="3110"/>
    </location>
</feature>
<feature type="region of interest" description="Disordered" evidence="11">
    <location>
        <begin position="3147"/>
        <end position="3209"/>
    </location>
</feature>
<feature type="region of interest" description="Disordered" evidence="11">
    <location>
        <begin position="3263"/>
        <end position="3339"/>
    </location>
</feature>
<feature type="region of interest" description="Disordered" evidence="11">
    <location>
        <begin position="3462"/>
        <end position="3499"/>
    </location>
</feature>
<feature type="region of interest" description="Disordered" evidence="11">
    <location>
        <begin position="3596"/>
        <end position="3673"/>
    </location>
</feature>
<feature type="region of interest" description="Disordered" evidence="11">
    <location>
        <begin position="3758"/>
        <end position="3802"/>
    </location>
</feature>
<feature type="region of interest" description="Disordered" evidence="11">
    <location>
        <begin position="3984"/>
        <end position="4191"/>
    </location>
</feature>
<feature type="region of interest" description="Disordered" evidence="11">
    <location>
        <begin position="4233"/>
        <end position="4398"/>
    </location>
</feature>
<feature type="region of interest" description="Disordered" evidence="11">
    <location>
        <begin position="4410"/>
        <end position="4452"/>
    </location>
</feature>
<feature type="region of interest" description="Disordered" evidence="11">
    <location>
        <begin position="4503"/>
        <end position="4544"/>
    </location>
</feature>
<feature type="region of interest" description="Disordered" evidence="11">
    <location>
        <begin position="4613"/>
        <end position="4727"/>
    </location>
</feature>
<feature type="region of interest" description="Disordered" evidence="11">
    <location>
        <begin position="4822"/>
        <end position="4857"/>
    </location>
</feature>
<feature type="region of interest" description="Disordered" evidence="11">
    <location>
        <begin position="4905"/>
        <end position="4980"/>
    </location>
</feature>
<feature type="coiled-coil region" evidence="3">
    <location>
        <begin position="2669"/>
        <end position="2707"/>
    </location>
</feature>
<feature type="coiled-coil region" evidence="3">
    <location>
        <begin position="3249"/>
        <end position="3282"/>
    </location>
</feature>
<feature type="coiled-coil region" evidence="3">
    <location>
        <begin position="3562"/>
        <end position="3614"/>
    </location>
</feature>
<feature type="coiled-coil region" evidence="3">
    <location>
        <begin position="3714"/>
        <end position="3750"/>
    </location>
</feature>
<feature type="coiled-coil region" evidence="3">
    <location>
        <begin position="3897"/>
        <end position="3975"/>
    </location>
</feature>
<feature type="short sequence motif" description="LXXLL motif 1">
    <location>
        <begin position="2686"/>
        <end position="2690"/>
    </location>
</feature>
<feature type="short sequence motif" description="LXXLL motif 2">
    <location>
        <begin position="3038"/>
        <end position="3042"/>
    </location>
</feature>
<feature type="short sequence motif" description="LXXLL motif 3">
    <location>
        <begin position="4222"/>
        <end position="4226"/>
    </location>
</feature>
<feature type="short sequence motif" description="LXXLL motif 4">
    <location>
        <begin position="4253"/>
        <end position="4257"/>
    </location>
</feature>
<feature type="short sequence motif" description="LXXLL motif 5">
    <location>
        <begin position="4463"/>
        <end position="4467"/>
    </location>
</feature>
<feature type="short sequence motif" description="LXXLL motif 6">
    <location>
        <begin position="4990"/>
        <end position="4994"/>
    </location>
</feature>
<feature type="short sequence motif" description="WDR5 interaction motif (WIN)" evidence="24 25">
    <location>
        <begin position="5337"/>
        <end position="5342"/>
    </location>
</feature>
<feature type="compositionally biased region" description="Polar residues" evidence="11">
    <location>
        <begin position="43"/>
        <end position="57"/>
    </location>
</feature>
<feature type="compositionally biased region" description="Pro residues" evidence="11">
    <location>
        <begin position="440"/>
        <end position="473"/>
    </location>
</feature>
<feature type="compositionally biased region" description="Low complexity" evidence="11">
    <location>
        <begin position="474"/>
        <end position="483"/>
    </location>
</feature>
<feature type="compositionally biased region" description="Pro residues" evidence="11">
    <location>
        <begin position="494"/>
        <end position="509"/>
    </location>
</feature>
<feature type="compositionally biased region" description="Low complexity" evidence="11">
    <location>
        <begin position="510"/>
        <end position="519"/>
    </location>
</feature>
<feature type="compositionally biased region" description="Pro residues" evidence="11">
    <location>
        <begin position="520"/>
        <end position="547"/>
    </location>
</feature>
<feature type="compositionally biased region" description="Pro residues" evidence="11">
    <location>
        <begin position="554"/>
        <end position="595"/>
    </location>
</feature>
<feature type="compositionally biased region" description="Low complexity" evidence="11">
    <location>
        <begin position="596"/>
        <end position="607"/>
    </location>
</feature>
<feature type="compositionally biased region" description="Pro residues" evidence="11">
    <location>
        <begin position="608"/>
        <end position="649"/>
    </location>
</feature>
<feature type="compositionally biased region" description="Low complexity" evidence="11">
    <location>
        <begin position="650"/>
        <end position="662"/>
    </location>
</feature>
<feature type="compositionally biased region" description="Pro residues" evidence="11">
    <location>
        <begin position="663"/>
        <end position="712"/>
    </location>
</feature>
<feature type="compositionally biased region" description="Low complexity" evidence="11">
    <location>
        <begin position="713"/>
        <end position="725"/>
    </location>
</feature>
<feature type="compositionally biased region" description="Basic and acidic residues" evidence="11">
    <location>
        <begin position="745"/>
        <end position="760"/>
    </location>
</feature>
<feature type="compositionally biased region" description="Basic and acidic residues" evidence="11">
    <location>
        <begin position="845"/>
        <end position="869"/>
    </location>
</feature>
<feature type="compositionally biased region" description="Low complexity" evidence="11">
    <location>
        <begin position="889"/>
        <end position="903"/>
    </location>
</feature>
<feature type="compositionally biased region" description="Low complexity" evidence="11">
    <location>
        <begin position="911"/>
        <end position="928"/>
    </location>
</feature>
<feature type="compositionally biased region" description="Pro residues" evidence="11">
    <location>
        <begin position="929"/>
        <end position="940"/>
    </location>
</feature>
<feature type="compositionally biased region" description="Low complexity" evidence="11">
    <location>
        <begin position="941"/>
        <end position="954"/>
    </location>
</feature>
<feature type="compositionally biased region" description="Pro residues" evidence="11">
    <location>
        <begin position="994"/>
        <end position="1008"/>
    </location>
</feature>
<feature type="compositionally biased region" description="Low complexity" evidence="11">
    <location>
        <begin position="1048"/>
        <end position="1057"/>
    </location>
</feature>
<feature type="compositionally biased region" description="Basic and acidic residues" evidence="11">
    <location>
        <begin position="1068"/>
        <end position="1080"/>
    </location>
</feature>
<feature type="compositionally biased region" description="Polar residues" evidence="11">
    <location>
        <begin position="1207"/>
        <end position="1216"/>
    </location>
</feature>
<feature type="compositionally biased region" description="Basic residues" evidence="11">
    <location>
        <begin position="1289"/>
        <end position="1302"/>
    </location>
</feature>
<feature type="compositionally biased region" description="Basic residues" evidence="11">
    <location>
        <begin position="1310"/>
        <end position="1329"/>
    </location>
</feature>
<feature type="compositionally biased region" description="Basic and acidic residues" evidence="11">
    <location>
        <begin position="1637"/>
        <end position="1666"/>
    </location>
</feature>
<feature type="compositionally biased region" description="Basic and acidic residues" evidence="11">
    <location>
        <begin position="1675"/>
        <end position="1685"/>
    </location>
</feature>
<feature type="compositionally biased region" description="Basic residues" evidence="11">
    <location>
        <begin position="1702"/>
        <end position="1712"/>
    </location>
</feature>
<feature type="compositionally biased region" description="Basic residues" evidence="11">
    <location>
        <begin position="1753"/>
        <end position="1762"/>
    </location>
</feature>
<feature type="compositionally biased region" description="Basic and acidic residues" evidence="11">
    <location>
        <begin position="1806"/>
        <end position="1825"/>
    </location>
</feature>
<feature type="compositionally biased region" description="Basic and acidic residues" evidence="11">
    <location>
        <begin position="1832"/>
        <end position="1841"/>
    </location>
</feature>
<feature type="compositionally biased region" description="Basic and acidic residues" evidence="11">
    <location>
        <begin position="1874"/>
        <end position="1889"/>
    </location>
</feature>
<feature type="compositionally biased region" description="Low complexity" evidence="11">
    <location>
        <begin position="1979"/>
        <end position="1990"/>
    </location>
</feature>
<feature type="compositionally biased region" description="Pro residues" evidence="11">
    <location>
        <begin position="2190"/>
        <end position="2209"/>
    </location>
</feature>
<feature type="compositionally biased region" description="Basic and acidic residues" evidence="11">
    <location>
        <begin position="2280"/>
        <end position="2292"/>
    </location>
</feature>
<feature type="compositionally biased region" description="Pro residues" evidence="11">
    <location>
        <begin position="2350"/>
        <end position="2365"/>
    </location>
</feature>
<feature type="compositionally biased region" description="Pro residues" evidence="11">
    <location>
        <begin position="2379"/>
        <end position="2393"/>
    </location>
</feature>
<feature type="compositionally biased region" description="Low complexity" evidence="11">
    <location>
        <begin position="2409"/>
        <end position="2431"/>
    </location>
</feature>
<feature type="compositionally biased region" description="Low complexity" evidence="11">
    <location>
        <begin position="2494"/>
        <end position="2505"/>
    </location>
</feature>
<feature type="compositionally biased region" description="Pro residues" evidence="11">
    <location>
        <begin position="2547"/>
        <end position="2560"/>
    </location>
</feature>
<feature type="compositionally biased region" description="Polar residues" evidence="11">
    <location>
        <begin position="2574"/>
        <end position="2584"/>
    </location>
</feature>
<feature type="compositionally biased region" description="Low complexity" evidence="11">
    <location>
        <begin position="2589"/>
        <end position="2609"/>
    </location>
</feature>
<feature type="compositionally biased region" description="Pro residues" evidence="11">
    <location>
        <begin position="2610"/>
        <end position="2621"/>
    </location>
</feature>
<feature type="compositionally biased region" description="Low complexity" evidence="11">
    <location>
        <begin position="2707"/>
        <end position="2722"/>
    </location>
</feature>
<feature type="compositionally biased region" description="Polar residues" evidence="11">
    <location>
        <begin position="2733"/>
        <end position="2746"/>
    </location>
</feature>
<feature type="compositionally biased region" description="Polar residues" evidence="11">
    <location>
        <begin position="2781"/>
        <end position="2790"/>
    </location>
</feature>
<feature type="compositionally biased region" description="Pro residues" evidence="11">
    <location>
        <begin position="2931"/>
        <end position="2940"/>
    </location>
</feature>
<feature type="compositionally biased region" description="Low complexity" evidence="11">
    <location>
        <begin position="3198"/>
        <end position="3209"/>
    </location>
</feature>
<feature type="compositionally biased region" description="Low complexity" evidence="11">
    <location>
        <begin position="3263"/>
        <end position="3289"/>
    </location>
</feature>
<feature type="compositionally biased region" description="Low complexity" evidence="11">
    <location>
        <begin position="3301"/>
        <end position="3320"/>
    </location>
</feature>
<feature type="compositionally biased region" description="Pro residues" evidence="11">
    <location>
        <begin position="3325"/>
        <end position="3334"/>
    </location>
</feature>
<feature type="compositionally biased region" description="Low complexity" evidence="11">
    <location>
        <begin position="3599"/>
        <end position="3612"/>
    </location>
</feature>
<feature type="compositionally biased region" description="Low complexity" evidence="11">
    <location>
        <begin position="3631"/>
        <end position="3643"/>
    </location>
</feature>
<feature type="compositionally biased region" description="Low complexity" evidence="11">
    <location>
        <begin position="4012"/>
        <end position="4023"/>
    </location>
</feature>
<feature type="compositionally biased region" description="Polar residues" evidence="11">
    <location>
        <begin position="4024"/>
        <end position="4045"/>
    </location>
</feature>
<feature type="compositionally biased region" description="Low complexity" evidence="11">
    <location>
        <begin position="4073"/>
        <end position="4108"/>
    </location>
</feature>
<feature type="compositionally biased region" description="Gly residues" evidence="11">
    <location>
        <begin position="4111"/>
        <end position="4120"/>
    </location>
</feature>
<feature type="compositionally biased region" description="Polar residues" evidence="11">
    <location>
        <begin position="4137"/>
        <end position="4154"/>
    </location>
</feature>
<feature type="compositionally biased region" description="Polar residues" evidence="11">
    <location>
        <begin position="4237"/>
        <end position="4251"/>
    </location>
</feature>
<feature type="compositionally biased region" description="Low complexity" evidence="11">
    <location>
        <begin position="4252"/>
        <end position="4282"/>
    </location>
</feature>
<feature type="compositionally biased region" description="Pro residues" evidence="11">
    <location>
        <begin position="4283"/>
        <end position="4293"/>
    </location>
</feature>
<feature type="compositionally biased region" description="Low complexity" evidence="11">
    <location>
        <begin position="4294"/>
        <end position="4305"/>
    </location>
</feature>
<feature type="compositionally biased region" description="Low complexity" evidence="11">
    <location>
        <begin position="4320"/>
        <end position="4331"/>
    </location>
</feature>
<feature type="compositionally biased region" description="Pro residues" evidence="11">
    <location>
        <begin position="4338"/>
        <end position="4357"/>
    </location>
</feature>
<feature type="compositionally biased region" description="Pro residues" evidence="11">
    <location>
        <begin position="4619"/>
        <end position="4633"/>
    </location>
</feature>
<feature type="compositionally biased region" description="Basic and acidic residues" evidence="11">
    <location>
        <begin position="4648"/>
        <end position="4673"/>
    </location>
</feature>
<feature type="compositionally biased region" description="Basic and acidic residues" evidence="11">
    <location>
        <begin position="4828"/>
        <end position="4849"/>
    </location>
</feature>
<feature type="compositionally biased region" description="Pro residues" evidence="11">
    <location>
        <begin position="4908"/>
        <end position="4931"/>
    </location>
</feature>
<feature type="compositionally biased region" description="Low complexity" evidence="11">
    <location>
        <begin position="4932"/>
        <end position="4941"/>
    </location>
</feature>
<feature type="compositionally biased region" description="Basic and acidic residues" evidence="11">
    <location>
        <begin position="4966"/>
        <end position="4976"/>
    </location>
</feature>
<feature type="binding site" evidence="7">
    <location>
        <position position="5451"/>
    </location>
    <ligand>
        <name>S-adenosyl-L-methionine</name>
        <dbReference type="ChEBI" id="CHEBI:59789"/>
    </ligand>
</feature>
<feature type="binding site" evidence="1">
    <location>
        <begin position="5474"/>
        <end position="5475"/>
    </location>
    <ligand>
        <name>S-adenosyl-L-methionine</name>
        <dbReference type="ChEBI" id="CHEBI:59789"/>
    </ligand>
</feature>
<feature type="binding site" evidence="1">
    <location>
        <position position="5477"/>
    </location>
    <ligand>
        <name>Zn(2+)</name>
        <dbReference type="ChEBI" id="CHEBI:29105"/>
    </ligand>
</feature>
<feature type="binding site" evidence="1">
    <location>
        <position position="5525"/>
    </location>
    <ligand>
        <name>Zn(2+)</name>
        <dbReference type="ChEBI" id="CHEBI:29105"/>
    </ligand>
</feature>
<feature type="binding site" evidence="1">
    <location>
        <position position="5527"/>
    </location>
    <ligand>
        <name>Zn(2+)</name>
        <dbReference type="ChEBI" id="CHEBI:29105"/>
    </ligand>
</feature>
<feature type="binding site" evidence="1">
    <location>
        <position position="5532"/>
    </location>
    <ligand>
        <name>Zn(2+)</name>
        <dbReference type="ChEBI" id="CHEBI:29105"/>
    </ligand>
</feature>
<feature type="modified residue" description="Phosphoserine" evidence="42">
    <location>
        <position position="27"/>
    </location>
</feature>
<feature type="modified residue" description="Phosphoserine" evidence="2">
    <location>
        <position position="744"/>
    </location>
</feature>
<feature type="modified residue" description="Phosphoserine" evidence="49">
    <location>
        <position position="1151"/>
    </location>
</feature>
<feature type="modified residue" description="Phosphothreonine" evidence="49">
    <location>
        <position position="1195"/>
    </location>
</feature>
<feature type="modified residue" description="Phosphoserine" evidence="49">
    <location>
        <position position="1249"/>
    </location>
</feature>
<feature type="modified residue" description="Phosphothreonine" evidence="2">
    <location>
        <position position="1267"/>
    </location>
</feature>
<feature type="modified residue" description="Phosphoserine" evidence="2">
    <location>
        <position position="1270"/>
    </location>
</feature>
<feature type="modified residue" description="Phosphoserine" evidence="45 47">
    <location>
        <position position="1606"/>
    </location>
</feature>
<feature type="modified residue" description="Phosphoserine" evidence="44 46 47">
    <location>
        <position position="1671"/>
    </location>
</feature>
<feature type="modified residue" description="Phosphoserine" evidence="47">
    <location>
        <position position="1820"/>
    </location>
</feature>
<feature type="modified residue" description="Phosphoserine" evidence="47">
    <location>
        <position position="1834"/>
    </location>
</feature>
<feature type="modified residue" description="Phosphothreonine" evidence="47">
    <location>
        <position position="1843"/>
    </location>
</feature>
<feature type="modified residue" description="Phosphothreonine" evidence="2">
    <location>
        <position position="1865"/>
    </location>
</feature>
<feature type="modified residue" description="Phosphoserine" evidence="49">
    <location>
        <position position="2239"/>
    </location>
</feature>
<feature type="modified residue" description="Phosphothreonine" evidence="47">
    <location>
        <position position="2240"/>
    </location>
</feature>
<feature type="modified residue" description="N6-acetyllysine" evidence="43">
    <location>
        <position position="2246"/>
    </location>
</feature>
<feature type="modified residue" description="Phosphoserine" evidence="47">
    <location>
        <position position="2260"/>
    </location>
</feature>
<feature type="modified residue" description="Phosphoserine" evidence="42 44 46 47">
    <location>
        <position position="2274"/>
    </location>
</feature>
<feature type="modified residue" description="Phosphoserine" evidence="42">
    <location>
        <position position="2309"/>
    </location>
</feature>
<feature type="modified residue" description="Phosphoserine" evidence="42">
    <location>
        <position position="2311"/>
    </location>
</feature>
<feature type="modified residue" description="Phosphoserine" evidence="2">
    <location>
        <position position="2342"/>
    </location>
</feature>
<feature type="modified residue" description="Asymmetric dimethylarginine" evidence="2">
    <location>
        <position position="2535"/>
    </location>
</feature>
<feature type="modified residue" description="Phosphoserine" evidence="47">
    <location>
        <position position="2640"/>
    </location>
</feature>
<feature type="modified residue" description="Asymmetric dimethylarginine" evidence="2">
    <location>
        <position position="2836"/>
    </location>
</feature>
<feature type="modified residue" description="N6-acetyllysine" evidence="43">
    <location>
        <position position="3079"/>
    </location>
</feature>
<feature type="modified residue" description="Phosphoserine" evidence="40 47">
    <location>
        <position position="3130"/>
    </location>
</feature>
<feature type="modified residue" description="Phosphothreonine" evidence="42 44 45">
    <location>
        <position position="3197"/>
    </location>
</feature>
<feature type="modified residue" description="Phosphoserine" evidence="45 47">
    <location>
        <position position="3199"/>
    </location>
</feature>
<feature type="modified residue" description="N6-acetyllysine" evidence="43">
    <location>
        <position position="3433"/>
    </location>
</feature>
<feature type="modified residue" description="Asymmetric dimethylarginine" evidence="48">
    <location>
        <position position="3727"/>
    </location>
</feature>
<feature type="modified residue" description="Asymmetric dimethylarginine" evidence="2">
    <location>
        <position position="4198"/>
    </location>
</feature>
<feature type="modified residue" description="Phosphoserine" evidence="45">
    <location>
        <position position="4215"/>
    </location>
</feature>
<feature type="modified residue" description="Phosphoserine" evidence="44 45 47">
    <location>
        <position position="4359"/>
    </location>
</feature>
<feature type="modified residue" description="N6-acetyllysine" evidence="43">
    <location>
        <position position="4465"/>
    </location>
</feature>
<feature type="modified residue" description="Phosphoserine" evidence="41 45 46 47 49">
    <location>
        <position position="4738"/>
    </location>
</feature>
<feature type="modified residue" description="N6-acetyllysine" evidence="43">
    <location>
        <position position="4776"/>
    </location>
</feature>
<feature type="modified residue" description="Phosphoserine" evidence="42 44 47">
    <location>
        <position position="4822"/>
    </location>
</feature>
<feature type="modified residue" description="Phosphoserine" evidence="47">
    <location>
        <position position="4849"/>
    </location>
</feature>
<feature type="cross-link" description="Glycyl lysine isopeptide (Lys-Gly) (interchain with G-Cter in SUMO2)" evidence="50 51">
    <location>
        <position position="4756"/>
    </location>
</feature>
<feature type="cross-link" description="Glycyl lysine isopeptide (Lys-Gly) (interchain with G-Cter in SUMO2)" evidence="51">
    <location>
        <position position="4880"/>
    </location>
</feature>
<feature type="splice variant" id="VSP_008560" description="In isoform 3." evidence="35">
    <original>E</original>
    <variation>EGET</variation>
    <location>
        <position position="1729"/>
    </location>
</feature>
<feature type="sequence variant" id="VAR_074216" description="In KABUK1; uncertain significance." evidence="26">
    <original>Q</original>
    <variation>H</variation>
    <location>
        <position position="170"/>
    </location>
</feature>
<feature type="sequence variant" id="VAR_074217" description="In KABUK1; uncertain significance; dbSNP:rs2120707168." evidence="26">
    <original>Q</original>
    <variation>L</variation>
    <location>
        <position position="170"/>
    </location>
</feature>
<feature type="sequence variant" id="VAR_087947" description="In KABUK1." evidence="21">
    <location>
        <begin position="223"/>
        <end position="5537"/>
    </location>
</feature>
<feature type="sequence variant" id="VAR_074218" description="In KABUK1; uncertain significance; dbSNP:rs200245957." evidence="23">
    <original>S</original>
    <variation>L</variation>
    <location>
        <position position="337"/>
    </location>
</feature>
<feature type="sequence variant" id="VAR_057359" description="In dbSNP:rs1064210.">
    <original>A</original>
    <variation>T</variation>
    <location>
        <position position="476"/>
    </location>
</feature>
<feature type="sequence variant" id="VAR_074219" description="In KABUK1; uncertain significance; dbSNP:rs776242478." evidence="20">
    <original>S</original>
    <variation>L</variation>
    <location>
        <position position="543"/>
    </location>
</feature>
<feature type="sequence variant" id="VAR_087948" description="In KABUK1." evidence="21">
    <location>
        <begin position="641"/>
        <end position="5537"/>
    </location>
</feature>
<feature type="sequence variant" id="VAR_074220" description="In KABUK1; dbSNP:rs200088180." evidence="20 26">
    <original>P</original>
    <variation>Q</variation>
    <location>
        <position position="647"/>
    </location>
</feature>
<feature type="sequence variant" id="VAR_064370" description="In dbSNP:rs202076833." evidence="19">
    <original>P</original>
    <variation>T</variation>
    <location>
        <position position="692"/>
    </location>
</feature>
<feature type="sequence variant" id="VAR_064371" description="In dbSNP:rs75226229." evidence="19">
    <original>P</original>
    <variation>L</variation>
    <location>
        <position position="813"/>
    </location>
</feature>
<feature type="sequence variant" id="VAR_074221" description="In KABUK1; uncertain significance; dbSNP:rs2120644343." evidence="20">
    <original>V</original>
    <variation>M</variation>
    <location>
        <position position="1192"/>
    </location>
</feature>
<feature type="sequence variant" id="VAR_074222" description="In KABUK1; uncertain significance; dbSNP:rs1341612248." evidence="21">
    <original>R</original>
    <variation>Q</variation>
    <location>
        <position position="1258"/>
    </location>
</feature>
<feature type="sequence variant" id="VAR_074223" description="In KABUK1; uncertain significance." evidence="28">
    <original>M</original>
    <variation>R</variation>
    <location>
        <position position="1376"/>
    </location>
</feature>
<feature type="sequence variant" id="VAR_074224" description="In KABUK1; uncertain significance; dbSNP:rs2120621227." evidence="26">
    <original>C</original>
    <variation>R</variation>
    <location>
        <position position="1380"/>
    </location>
</feature>
<feature type="sequence variant" id="VAR_074225" description="In KABUK1; uncertain significance; dbSNP:rs202217665." evidence="22">
    <original>R</original>
    <variation>L</variation>
    <location>
        <position position="1388"/>
    </location>
</feature>
<feature type="sequence variant" id="VAR_074226" description="In KABUK1; uncertain significance; dbSNP:rs2120612749." evidence="21">
    <original>M</original>
    <variation>V</variation>
    <location>
        <position position="1417"/>
    </location>
</feature>
<feature type="sequence variant" id="VAR_074227" description="In KABUK1; uncertain significance." evidence="21">
    <original>L</original>
    <variation>M</variation>
    <location>
        <position position="1418"/>
    </location>
</feature>
<feature type="sequence variant" id="VAR_074228" description="In KABUK1; uncertain significance." evidence="28">
    <original>R</original>
    <variation>C</variation>
    <location>
        <position position="1423"/>
    </location>
</feature>
<feature type="sequence variant" id="VAR_074229" description="In KABUK1; uncertain significance." evidence="29">
    <original>C</original>
    <variation>F</variation>
    <location>
        <position position="1424"/>
    </location>
</feature>
<feature type="sequence variant" id="VAR_074230" description="In KABUK1; uncertain significance; dbSNP:rs2120612063." evidence="22">
    <original>C</original>
    <variation>R</variation>
    <location>
        <position position="1430"/>
    </location>
</feature>
<feature type="sequence variant" id="VAR_074231" description="In KABUK1; uncertain significance." evidence="28">
    <original>C</original>
    <variation>G</variation>
    <location>
        <position position="1445"/>
    </location>
</feature>
<feature type="sequence variant" id="VAR_074232" description="In KABUK1; uncertain significance." evidence="20">
    <original>H</original>
    <variation>R</variation>
    <location>
        <position position="1453"/>
    </location>
</feature>
<feature type="sequence variant" id="VAR_074233" description="In KABUK1; uncertain significance." evidence="26">
    <original>C</original>
    <variation>R</variation>
    <location>
        <position position="1471"/>
    </location>
</feature>
<feature type="sequence variant" id="VAR_074234" description="In KABUK1; uncertain significance; dbSNP:rs2120609474." evidence="22">
    <original>C</original>
    <variation>Y</variation>
    <location>
        <position position="1471"/>
    </location>
</feature>
<feature type="sequence variant" id="VAR_087949" description="In KABUK1." evidence="21">
    <location>
        <begin position="1473"/>
        <end position="5537"/>
    </location>
</feature>
<feature type="sequence variant" id="VAR_074235" description="In KABUK1; uncertain significance; dbSNP:rs1592145879." evidence="21">
    <original>Q</original>
    <variation>R</variation>
    <location>
        <position position="1522"/>
    </location>
</feature>
<feature type="sequence variant" id="VAR_074236" description="In KABUK1; uncertain significance." evidence="28">
    <original>C</original>
    <variation>F</variation>
    <location>
        <position position="1526"/>
    </location>
</feature>
<feature type="sequence variant" id="VAR_074237" description="In KABUK1; uncertain significance; dbSNP:rs111266743." evidence="20">
    <original>A</original>
    <variation>V</variation>
    <location>
        <position position="1718"/>
    </location>
</feature>
<feature type="sequence variant" id="VAR_087950" description="In KABUK1." evidence="21 31">
    <location>
        <begin position="2099"/>
        <end position="5537"/>
    </location>
</feature>
<feature type="sequence variant" id="VAR_064372" description="In dbSNP:rs3741626." evidence="19">
    <original>P</original>
    <variation>S</variation>
    <location>
        <position position="2382"/>
    </location>
</feature>
<feature type="sequence variant" id="VAR_087951" description="In KABUK1." evidence="21">
    <location>
        <begin position="2416"/>
        <end position="5537"/>
    </location>
</feature>
<feature type="sequence variant" id="VAR_064373" description="In dbSNP:rs570260017." evidence="19">
    <original>R</original>
    <variation>C</variation>
    <location>
        <position position="2460"/>
    </location>
</feature>
<feature type="sequence variant" id="VAR_064374" description="In dbSNP:rs189888707." evidence="19 26">
    <original>P</original>
    <variation>L</variation>
    <location>
        <position position="2557"/>
    </location>
</feature>
<feature type="sequence variant" id="VAR_087952" description="In KABUK1." evidence="21">
    <location>
        <begin position="2635"/>
        <end position="5537"/>
    </location>
</feature>
<feature type="sequence variant" id="VAR_074238" description="In dbSNP:rs147706410." evidence="26">
    <original>M</original>
    <variation>L</variation>
    <location>
        <position position="2652"/>
    </location>
</feature>
<feature type="sequence variant" id="VAR_074239" description="In KABUK1; uncertain significance; dbSNP:rs763347763." evidence="21">
    <original>P</original>
    <variation>T</variation>
    <location>
        <position position="2841"/>
    </location>
</feature>
<feature type="sequence variant" id="VAR_087953" description="In KABUK1." evidence="21">
    <location>
        <begin position="3379"/>
        <end position="5537"/>
    </location>
</feature>
<feature type="sequence variant" id="VAR_064375" description="In dbSNP:rs75937132." evidence="19">
    <original>M</original>
    <variation>V</variation>
    <location>
        <position position="3398"/>
    </location>
</feature>
<feature type="sequence variant" id="VAR_064376" description="In dbSNP:rs146044282." evidence="19">
    <original>D</original>
    <variation>G</variation>
    <location>
        <position position="3419"/>
    </location>
</feature>
<feature type="sequence variant" id="VAR_087954" description="In BCAHH; dbSNP:rs1555189307." evidence="33">
    <original>L</original>
    <variation>P</variation>
    <location>
        <position position="3525"/>
    </location>
</feature>
<feature type="sequence variant" id="VAR_087955" description="In BCAHH; dbSNP:rs2120454333." evidence="32 33">
    <original>L</original>
    <variation>V</variation>
    <location>
        <position position="3528"/>
    </location>
</feature>
<feature type="sequence variant" id="VAR_087956" description="In BCAHH; dbSNP:rs2120453584." evidence="33">
    <original>A</original>
    <variation>P</variation>
    <location>
        <position position="3541"/>
    </location>
</feature>
<feature type="sequence variant" id="VAR_087957" description="In BCAHH; affects secondary structure as shown by circular dichroism analysis; dbSNP:rs2120453489." evidence="32">
    <original>L</original>
    <variation>P</variation>
    <location>
        <position position="3542"/>
    </location>
</feature>
<feature type="sequence variant" id="VAR_087958" description="In BCAHH; affects secondary structure as shown by circular dichroism analysis; dbSNP:rs2120452825." evidence="32">
    <original>G</original>
    <variation>V</variation>
    <location>
        <position position="3553"/>
    </location>
</feature>
<feature type="sequence variant" id="VAR_087959" description="In BCAHH; dbSNP:rs2120452029." evidence="33">
    <original>L</original>
    <variation>V</variation>
    <location>
        <position position="3564"/>
    </location>
</feature>
<feature type="sequence variant" id="VAR_087960" description="In BCAHH; uncertain significance; dbSNP:rs2120451660." evidence="34">
    <original>E</original>
    <variation>G</variation>
    <location>
        <position position="3569"/>
    </location>
</feature>
<feature type="sequence variant" id="VAR_087961" description="In BCAHH; dbSNP:rs2120449499." evidence="32 34">
    <original>R</original>
    <variation>Q</variation>
    <location>
        <position position="3582"/>
    </location>
</feature>
<feature type="sequence variant" id="VAR_087962" description="In BCAHH; affects secondary structure as shown by circular dichroism analysis; dbSNP:rs1943085639." evidence="32">
    <original>R</original>
    <variation>W</variation>
    <location>
        <position position="3582"/>
    </location>
</feature>
<feature type="sequence variant" id="VAR_087963" description="In KABUK1." evidence="21">
    <location>
        <begin position="3614"/>
        <end position="5537"/>
    </location>
</feature>
<feature type="sequence variant" id="VAR_087964" description="In KABUK1." evidence="21">
    <location>
        <begin position="3707"/>
        <end position="5537"/>
    </location>
</feature>
<feature type="sequence variant" id="VAR_087965" description="In KABUK1." evidence="21">
    <location>
        <begin position="3757"/>
        <end position="5537"/>
    </location>
</feature>
<feature type="sequence variant" id="VAR_087966" description="In KABUK1." evidence="21">
    <location>
        <begin position="3812"/>
        <end position="5537"/>
    </location>
</feature>
<feature type="sequence variant" id="VAR_074240" description="In KABUK1; uncertain significance; dbSNP:rs1943029611." evidence="26">
    <original>L</original>
    <variation>R</variation>
    <location>
        <position position="3876"/>
    </location>
</feature>
<feature type="sequence variant" id="VAR_074241" description="In KABUK1; uncertain significance; dbSNP:rs1342235871." evidence="26">
    <original>L</original>
    <variation>S</variation>
    <location>
        <position position="3897"/>
    </location>
</feature>
<feature type="sequence variant" id="VAR_074242" description="In dbSNP:rs80132640." evidence="26">
    <original>S</original>
    <variation>P</variation>
    <location>
        <position position="4010"/>
    </location>
</feature>
<feature type="sequence variant" id="VAR_087967" description="In KABUK1." evidence="21">
    <location>
        <begin position="4026"/>
        <end position="5537"/>
    </location>
</feature>
<feature type="sequence variant" id="VAR_087968" description="In KABUK1." evidence="21">
    <location>
        <begin position="4092"/>
        <end position="5537"/>
    </location>
</feature>
<feature type="sequence variant" id="VAR_074243" description="In KABUK1; uncertain significance; dbSNP:rs778418522." evidence="23">
    <original>P</original>
    <variation>L</variation>
    <location>
        <position position="4353"/>
    </location>
</feature>
<feature type="sequence variant" id="VAR_064377" description="In dbSNP:rs533214351." evidence="19">
    <original>R</original>
    <variation>S</variation>
    <location>
        <position position="4357"/>
    </location>
</feature>
<feature type="sequence variant" id="VAR_074244" description="In KABUK1; uncertain significance; dbSNP:rs375999143." evidence="29">
    <original>R</original>
    <variation>Q</variation>
    <location>
        <position position="4420"/>
    </location>
</feature>
<feature type="sequence variant" id="VAR_087969" description="In KABUK1." evidence="21">
    <location>
        <begin position="4556"/>
        <end position="5537"/>
    </location>
</feature>
<feature type="sequence variant" id="VAR_087970" description="In KABUK1." evidence="21">
    <location>
        <begin position="5027"/>
        <end position="5537"/>
    </location>
</feature>
<feature type="sequence variant" id="VAR_074245" description="In KABUK1; uncertain significance." evidence="21">
    <original>D</original>
    <variation>E</variation>
    <location>
        <position position="5028"/>
    </location>
</feature>
<feature type="sequence variant" id="VAR_074246" description="In KABUK1; dbSNP:rs1555185875." evidence="26 28">
    <original>R</original>
    <variation>C</variation>
    <location>
        <position position="5030"/>
    </location>
</feature>
<feature type="sequence variant" id="VAR_074247" description="In KABUK1; uncertain significance; dbSNP:rs2120363860." evidence="21">
    <original>F</original>
    <variation>V</variation>
    <location>
        <position position="5034"/>
    </location>
</feature>
<feature type="sequence variant" id="VAR_074248" description="In KABUK1; uncertain significance; dbSNP:rs2120363580." evidence="28">
    <original>D</original>
    <variation>G</variation>
    <location>
        <position position="5040"/>
    </location>
</feature>
<feature type="sequence variant" id="VAR_074249" description="In KABUK1; uncertain significance; dbSNP:rs2120363322." evidence="23">
    <original>A</original>
    <variation>V</variation>
    <location>
        <position position="5047"/>
    </location>
</feature>
<feature type="sequence variant" id="VAR_074250" description="In KABUK1; dbSNP:rs398123724." evidence="22 23 26 28">
    <original>R</original>
    <variation>C</variation>
    <location>
        <position position="5048"/>
    </location>
</feature>
<feature type="sequence variant" id="VAR_074251" description="In KABUK1; dbSNP:rs886041404." evidence="26 28">
    <original>R</original>
    <variation>H</variation>
    <location>
        <position position="5048"/>
    </location>
</feature>
<feature type="sequence variant" id="VAR_074252" description="In KABUK1; uncertain significance; dbSNP:rs1942615651." evidence="21">
    <original>H</original>
    <variation>P</variation>
    <location>
        <position position="5059"/>
    </location>
</feature>
<feature type="sequence variant" id="VAR_063830" description="In KABUK1." evidence="18 22">
    <original>C</original>
    <variation>F</variation>
    <location>
        <position position="5109"/>
    </location>
</feature>
<feature type="sequence variant" id="VAR_074253" description="In KABUK1; dbSNP:rs886043497." evidence="20 28">
    <original>R</original>
    <variation>Q</variation>
    <location>
        <position position="5154"/>
    </location>
</feature>
<feature type="sequence variant" id="VAR_063831" description="In KABUK1; dbSNP:rs267607237." evidence="18 22 28">
    <original>R</original>
    <variation>H</variation>
    <location>
        <position position="5179"/>
    </location>
</feature>
<feature type="sequence variant" id="VAR_074254" description="In KABUK1; uncertain significance; dbSNP:rs1555185701." evidence="28">
    <original>G</original>
    <variation>R</variation>
    <location>
        <position position="5189"/>
    </location>
</feature>
<feature type="sequence variant" id="VAR_064378" description="In KABUK1; uncertain significance; dbSNP:rs1942587772." evidence="19">
    <original>Y</original>
    <variation>C</variation>
    <location>
        <position position="5210"/>
    </location>
</feature>
<feature type="sequence variant" id="VAR_074255" description="In KABUK1; dbSNP:rs398123728." evidence="22 23 26">
    <original>R</original>
    <variation>C</variation>
    <location>
        <position position="5214"/>
    </location>
</feature>
<feature type="sequence variant" id="VAR_063832" description="In KABUK1; dbSNP:rs398123729." evidence="18 22">
    <original>R</original>
    <variation>H</variation>
    <location>
        <position position="5214"/>
    </location>
</feature>
<feature type="sequence variant" id="VAR_017115" description="In dbSNP:rs3782356.">
    <original>R</original>
    <variation>H</variation>
    <location>
        <position position="5224"/>
    </location>
</feature>
<feature type="sequence variant" id="VAR_063833" description="In KABUK1." evidence="18 22">
    <original>R</original>
    <variation>L</variation>
    <location>
        <position position="5340"/>
    </location>
</feature>
<feature type="sequence variant" id="VAR_074256" description="In KABUK1; uncertain significance; dbSNP:rs1565756106." evidence="21">
    <original>R</original>
    <variation>Q</variation>
    <location>
        <position position="5340"/>
    </location>
</feature>
<feature type="sequence variant" id="VAR_074257" description="In KABUK1; uncertain significance; dbSNP:rs1555185217." evidence="28">
    <original>R</original>
    <variation>Q</variation>
    <location>
        <position position="5351"/>
    </location>
</feature>
<feature type="sequence variant" id="VAR_064379" description="In KABUK1; uncertain significance; dbSNP:rs2137706479." evidence="19">
    <original>G</original>
    <variation>D</variation>
    <location>
        <position position="5428"/>
    </location>
</feature>
<feature type="sequence variant" id="VAR_074258" description="In KABUK1; uncertain significance; dbSNP:rs1565753611." evidence="26">
    <original>R</original>
    <variation>W</variation>
    <location>
        <position position="5432"/>
    </location>
</feature>
<feature type="sequence variant" id="VAR_063834" description="In KABUK1; dbSNP:rs267607238." evidence="18 22">
    <original>T</original>
    <variation>M</variation>
    <location>
        <position position="5464"/>
    </location>
</feature>
<feature type="sequence variant" id="VAR_074259" description="In KABUK1; dbSNP:rs1555184684." evidence="22 23">
    <original>R</original>
    <variation>T</variation>
    <location>
        <position position="5471"/>
    </location>
</feature>
<feature type="sequence variant" id="VAR_074260" description="In KABUK1; uncertain significance; dbSNP:rs1388523736." evidence="23">
    <original>C</original>
    <variation>Y</variation>
    <location>
        <position position="5481"/>
    </location>
</feature>
<feature type="sequence variant" id="VAR_074261" description="In KABUK1; dbSNP:rs2137703609." evidence="20 26">
    <original>S</original>
    <variation>F</variation>
    <location>
        <position position="5498"/>
    </location>
</feature>
<feature type="mutagenesis site" description="Abolishes interaction with S-adenosyl-L-methionine." evidence="30">
    <original>N</original>
    <variation>A</variation>
    <location>
        <position position="5474"/>
    </location>
</feature>
<feature type="sequence conflict" description="In Ref. 1; AAC51734." evidence="36" ref="1">
    <original>K</original>
    <variation>N</variation>
    <location>
        <position position="5"/>
    </location>
</feature>
<feature type="sequence conflict" description="In Ref. 1; AAC51734." evidence="36" ref="1">
    <original>E</original>
    <variation>Q</variation>
    <location>
        <position position="14"/>
    </location>
</feature>
<feature type="sequence conflict" description="In Ref. 1; AAC51734." evidence="36" ref="1">
    <original>S</original>
    <variation>A</variation>
    <location>
        <position position="75"/>
    </location>
</feature>
<feature type="sequence conflict" description="In Ref. 1; AAC51734." evidence="36" ref="1">
    <original>E</original>
    <variation>Q</variation>
    <location>
        <position position="156"/>
    </location>
</feature>
<feature type="sequence conflict" description="In Ref. 1; AAC51734." evidence="36" ref="1">
    <location>
        <begin position="674"/>
        <end position="948"/>
    </location>
</feature>
<feature type="sequence conflict" description="In Ref. 1; AAC51734/AAC51735." evidence="36" ref="1">
    <original>Q</original>
    <variation>R</variation>
    <location>
        <position position="1178"/>
    </location>
</feature>
<feature type="sequence conflict" description="In Ref. 1; AAC51734/AAC51735." evidence="36" ref="1">
    <original>EQAA</original>
    <variation>DHAP</variation>
    <location>
        <begin position="1544"/>
        <end position="1547"/>
    </location>
</feature>
<feature type="sequence conflict" description="In Ref. 1; AAC51734/AAC51735." evidence="36" ref="1">
    <original>K</original>
    <variation>R</variation>
    <location>
        <position position="1761"/>
    </location>
</feature>
<feature type="sequence conflict" description="In Ref. 1; AAC51734/AAC51735." evidence="36" ref="1">
    <original>D</original>
    <variation>G</variation>
    <location>
        <position position="1766"/>
    </location>
</feature>
<feature type="sequence conflict" description="In Ref. 1; AAC51734/AAC51735." evidence="36" ref="1">
    <original>V</original>
    <variation>A</variation>
    <location>
        <position position="2171"/>
    </location>
</feature>
<feature type="sequence conflict" description="In Ref. 1; AAC51734/AAC51735." evidence="36" ref="1">
    <original>A</original>
    <variation>V</variation>
    <location>
        <position position="2413"/>
    </location>
</feature>
<feature type="sequence conflict" description="In Ref. 1; AAC51734/AAC51735." evidence="36" ref="1">
    <original>K</original>
    <variation>E</variation>
    <location>
        <position position="3079"/>
    </location>
</feature>
<feature type="sequence conflict" description="In Ref. 1; AAC51734/AAC51735." evidence="36" ref="1">
    <original>S</original>
    <variation>P</variation>
    <location>
        <position position="3287"/>
    </location>
</feature>
<feature type="sequence conflict" description="In Ref. 1; AAC51734/AAC51735." evidence="36" ref="1">
    <original>G</original>
    <variation>V</variation>
    <location>
        <position position="3319"/>
    </location>
</feature>
<feature type="sequence conflict" description="In Ref. 1; AAC51734/AAC51735." evidence="36" ref="1">
    <original>D</original>
    <variation>G</variation>
    <location>
        <position position="3422"/>
    </location>
</feature>
<feature type="sequence conflict" description="In Ref. 1; AAC51734/AAC51735." evidence="36" ref="1">
    <original>R</original>
    <variation>Q</variation>
    <location>
        <position position="4478"/>
    </location>
</feature>
<feature type="sequence conflict" description="In Ref. 1; AAC51734/AAC51735." evidence="36" ref="1">
    <original>A</original>
    <variation>D</variation>
    <location>
        <position position="4747"/>
    </location>
</feature>
<feature type="sequence conflict" description="In Ref. 1; AAC51734/AAC51735." evidence="36" ref="1">
    <original>A</original>
    <variation>D</variation>
    <location>
        <position position="4793"/>
    </location>
</feature>
<feature type="sequence conflict" description="In Ref. 1; AAC51734/AAC51735." evidence="36" ref="1">
    <original>A</original>
    <variation>G</variation>
    <location>
        <position position="4826"/>
    </location>
</feature>
<feature type="sequence conflict" description="In Ref. 1; AAC51734/AAC51735." evidence="36" ref="1">
    <original>P</original>
    <variation>A</variation>
    <location>
        <position position="4865"/>
    </location>
</feature>
<feature type="sequence conflict" description="In Ref. 1; AAC51734/AAC51735." evidence="36" ref="1">
    <original>S</original>
    <variation>R</variation>
    <location>
        <position position="4871"/>
    </location>
</feature>
<feature type="sequence conflict" description="In Ref. 1; AAC51734/AAC51735." evidence="36" ref="1">
    <original>S</original>
    <variation>R</variation>
    <location>
        <position position="4893"/>
    </location>
</feature>
<feature type="sequence conflict" description="In Ref. 1; AAC51734/AAC51735." evidence="36" ref="1">
    <original>S</original>
    <variation>T</variation>
    <location>
        <position position="4974"/>
    </location>
</feature>
<feature type="sequence conflict" description="In Ref. 1; AAC51734/AAC51735." evidence="36" ref="1">
    <original>A</original>
    <variation>G</variation>
    <location>
        <position position="5116"/>
    </location>
</feature>
<feature type="sequence conflict" description="In Ref. 1; AAC51734/AAC51735." evidence="36" ref="1">
    <original>K</original>
    <variation>E</variation>
    <location>
        <position position="5522"/>
    </location>
</feature>
<feature type="turn" evidence="54">
    <location>
        <begin position="1508"/>
        <end position="1511"/>
    </location>
</feature>
<feature type="strand" evidence="54">
    <location>
        <begin position="1516"/>
        <end position="1518"/>
    </location>
</feature>
<feature type="strand" evidence="54">
    <location>
        <begin position="1520"/>
        <end position="1522"/>
    </location>
</feature>
<feature type="turn" evidence="54">
    <location>
        <begin position="1524"/>
        <end position="1526"/>
    </location>
</feature>
<feature type="strand" evidence="54">
    <location>
        <begin position="1529"/>
        <end position="1532"/>
    </location>
</feature>
<feature type="helix" evidence="54">
    <location>
        <begin position="1533"/>
        <end position="1535"/>
    </location>
</feature>
<feature type="helix" evidence="54">
    <location>
        <begin position="1540"/>
        <end position="1548"/>
    </location>
</feature>
<feature type="helix" evidence="54">
    <location>
        <begin position="1556"/>
        <end position="1560"/>
    </location>
</feature>
<feature type="helix" evidence="52">
    <location>
        <begin position="5339"/>
        <end position="5341"/>
    </location>
</feature>
<feature type="helix" evidence="53">
    <location>
        <begin position="5384"/>
        <end position="5398"/>
    </location>
</feature>
<feature type="strand" evidence="53">
    <location>
        <begin position="5399"/>
        <end position="5403"/>
    </location>
</feature>
<feature type="strand" evidence="53">
    <location>
        <begin position="5405"/>
        <end position="5415"/>
    </location>
</feature>
<feature type="strand" evidence="53">
    <location>
        <begin position="5422"/>
        <end position="5425"/>
    </location>
</feature>
<feature type="strand" evidence="53">
    <location>
        <begin position="5428"/>
        <end position="5432"/>
    </location>
</feature>
<feature type="helix" evidence="53">
    <location>
        <begin position="5433"/>
        <end position="5444"/>
    </location>
</feature>
<feature type="turn" evidence="53">
    <location>
        <begin position="5445"/>
        <end position="5447"/>
    </location>
</feature>
<feature type="strand" evidence="53">
    <location>
        <begin position="5452"/>
        <end position="5454"/>
    </location>
</feature>
<feature type="strand" evidence="53">
    <location>
        <begin position="5456"/>
        <end position="5462"/>
    </location>
</feature>
<feature type="turn" evidence="53">
    <location>
        <begin position="5464"/>
        <end position="5466"/>
    </location>
</feature>
<feature type="helix" evidence="53">
    <location>
        <begin position="5469"/>
        <end position="5472"/>
    </location>
</feature>
<feature type="strand" evidence="53">
    <location>
        <begin position="5480"/>
        <end position="5488"/>
    </location>
</feature>
<feature type="strand" evidence="53">
    <location>
        <begin position="5491"/>
        <end position="5500"/>
    </location>
</feature>
<feature type="strand" evidence="53">
    <location>
        <begin position="5516"/>
        <end position="5520"/>
    </location>
</feature>
<feature type="strand" evidence="53">
    <location>
        <begin position="5534"/>
        <end position="5536"/>
    </location>
</feature>
<keyword id="KW-0002">3D-structure</keyword>
<keyword id="KW-0007">Acetylation</keyword>
<keyword id="KW-0025">Alternative splicing</keyword>
<keyword id="KW-0156">Chromatin regulator</keyword>
<keyword id="KW-0175">Coiled coil</keyword>
<keyword id="KW-0984">Congenital hypothyroidism</keyword>
<keyword id="KW-0209">Deafness</keyword>
<keyword id="KW-0225">Disease variant</keyword>
<keyword id="KW-0991">Intellectual disability</keyword>
<keyword id="KW-1017">Isopeptide bond</keyword>
<keyword id="KW-0479">Metal-binding</keyword>
<keyword id="KW-0488">Methylation</keyword>
<keyword id="KW-0489">Methyltransferase</keyword>
<keyword id="KW-0539">Nucleus</keyword>
<keyword id="KW-0597">Phosphoprotein</keyword>
<keyword id="KW-1267">Proteomics identification</keyword>
<keyword id="KW-1185">Reference proteome</keyword>
<keyword id="KW-0677">Repeat</keyword>
<keyword id="KW-0949">S-adenosyl-L-methionine</keyword>
<keyword id="KW-0804">Transcription</keyword>
<keyword id="KW-0805">Transcription regulation</keyword>
<keyword id="KW-0808">Transferase</keyword>
<keyword id="KW-0832">Ubl conjugation</keyword>
<keyword id="KW-0862">Zinc</keyword>
<keyword id="KW-0863">Zinc-finger</keyword>